<comment type="function">
    <text evidence="10">One of the primary rRNA binding proteins, it binds directly to 16S rRNA where it helps nucleate assembly of the body and platform of the 30S subunit. Binds mRNA in the 70S ribosome, positioning it for translation.</text>
</comment>
<comment type="cofactor">
    <cofactor evidence="10">
        <name>Zn(2+)</name>
        <dbReference type="ChEBI" id="CHEBI:29105"/>
    </cofactor>
    <cofactor evidence="12 13">
        <name>[4Fe-4S] cluster</name>
        <dbReference type="ChEBI" id="CHEBI:49883"/>
    </cofactor>
    <text evidence="10 12 13">Binds 1 zinc ion per subunit (PubMed:11866529). In a number of structures (e.g. 4Y4O, 5FDV) a 4Fe-4S cluster is seen in place of the zinc cofactor (PubMed:25775268, PubMed:26792896).</text>
</comment>
<comment type="subunit">
    <text evidence="1 2 3 4 5 6 7 8 9 10 12 13">Part of the 30S ribosomal subunit (PubMed:11007480, PubMed:11014182, PubMed:11014183, PubMed:11163189, PubMed:11228145, PubMed:11283358, PubMed:11296217, PubMed:11340196, PubMed:11511350, PubMed:11866529, PubMed:25775268, PubMed:26792896). Contacts protein S5 (PubMed:11340196). The interaction surface between S4 and S5 is involved in control of translational fidelity.</text>
</comment>
<comment type="mass spectrometry"/>
<comment type="similarity">
    <text evidence="15">Belongs to the universal ribosomal protein uS4 family.</text>
</comment>
<organism>
    <name type="scientific">Thermus thermophilus (strain ATCC 27634 / DSM 579 / HB8)</name>
    <dbReference type="NCBI Taxonomy" id="300852"/>
    <lineage>
        <taxon>Bacteria</taxon>
        <taxon>Thermotogati</taxon>
        <taxon>Deinococcota</taxon>
        <taxon>Deinococci</taxon>
        <taxon>Thermales</taxon>
        <taxon>Thermaceae</taxon>
        <taxon>Thermus</taxon>
    </lineage>
</organism>
<feature type="initiator methionine" description="Removed" evidence="14">
    <location>
        <position position="1"/>
    </location>
</feature>
<feature type="chain" id="PRO_0000132483" description="Small ribosomal subunit protein uS4">
    <location>
        <begin position="2"/>
        <end position="209"/>
    </location>
</feature>
<feature type="domain" description="S4 RNA-binding">
    <location>
        <begin position="99"/>
        <end position="161"/>
    </location>
</feature>
<feature type="binding site" evidence="10">
    <location>
        <position position="9"/>
    </location>
    <ligand>
        <name>Zn(2+)</name>
        <dbReference type="ChEBI" id="CHEBI:29105"/>
    </ligand>
</feature>
<feature type="binding site" evidence="10">
    <location>
        <position position="12"/>
    </location>
    <ligand>
        <name>Zn(2+)</name>
        <dbReference type="ChEBI" id="CHEBI:29105"/>
    </ligand>
</feature>
<feature type="binding site" evidence="10">
    <location>
        <position position="26"/>
    </location>
    <ligand>
        <name>Zn(2+)</name>
        <dbReference type="ChEBI" id="CHEBI:29105"/>
    </ligand>
</feature>
<feature type="binding site" evidence="10">
    <location>
        <position position="31"/>
    </location>
    <ligand>
        <name>Zn(2+)</name>
        <dbReference type="ChEBI" id="CHEBI:29105"/>
    </ligand>
</feature>
<feature type="sequence conflict" description="In Ref. 3; AA sequence." evidence="15" ref="3">
    <original>C</original>
    <variation>S</variation>
    <location>
        <position position="12"/>
    </location>
</feature>
<feature type="sequence conflict" description="In Ref. 3; AA sequence." evidence="15" ref="3">
    <original>C</original>
    <variation>D</variation>
    <location>
        <position position="26"/>
    </location>
</feature>
<feature type="helix" evidence="17">
    <location>
        <begin position="9"/>
        <end position="15"/>
    </location>
</feature>
<feature type="strand" evidence="16">
    <location>
        <begin position="21"/>
        <end position="23"/>
    </location>
</feature>
<feature type="strand" evidence="17">
    <location>
        <begin position="26"/>
        <end position="28"/>
    </location>
</feature>
<feature type="helix" evidence="18">
    <location>
        <begin position="29"/>
        <end position="31"/>
    </location>
</feature>
<feature type="helix" evidence="17">
    <location>
        <begin position="33"/>
        <end position="35"/>
    </location>
</feature>
<feature type="turn" evidence="17">
    <location>
        <begin position="42"/>
        <end position="45"/>
    </location>
</feature>
<feature type="helix" evidence="17">
    <location>
        <begin position="53"/>
        <end position="68"/>
    </location>
</feature>
<feature type="helix" evidence="17">
    <location>
        <begin position="72"/>
        <end position="84"/>
    </location>
</feature>
<feature type="strand" evidence="17">
    <location>
        <begin position="85"/>
        <end position="87"/>
    </location>
</feature>
<feature type="helix" evidence="17">
    <location>
        <begin position="89"/>
        <end position="98"/>
    </location>
</feature>
<feature type="helix" evidence="17">
    <location>
        <begin position="101"/>
        <end position="107"/>
    </location>
</feature>
<feature type="strand" evidence="17">
    <location>
        <begin position="110"/>
        <end position="113"/>
    </location>
</feature>
<feature type="helix" evidence="17">
    <location>
        <begin position="114"/>
        <end position="122"/>
    </location>
</feature>
<feature type="turn" evidence="19">
    <location>
        <begin position="123"/>
        <end position="125"/>
    </location>
</feature>
<feature type="strand" evidence="17">
    <location>
        <begin position="126"/>
        <end position="128"/>
    </location>
</feature>
<feature type="strand" evidence="19">
    <location>
        <begin position="131"/>
        <end position="133"/>
    </location>
</feature>
<feature type="strand" evidence="17">
    <location>
        <begin position="145"/>
        <end position="148"/>
    </location>
</feature>
<feature type="helix" evidence="17">
    <location>
        <begin position="150"/>
        <end position="152"/>
    </location>
</feature>
<feature type="helix" evidence="17">
    <location>
        <begin position="156"/>
        <end position="164"/>
    </location>
</feature>
<feature type="turn" evidence="17">
    <location>
        <begin position="165"/>
        <end position="167"/>
    </location>
</feature>
<feature type="strand" evidence="16">
    <location>
        <begin position="174"/>
        <end position="177"/>
    </location>
</feature>
<feature type="turn" evidence="17">
    <location>
        <begin position="178"/>
        <end position="181"/>
    </location>
</feature>
<feature type="strand" evidence="17">
    <location>
        <begin position="182"/>
        <end position="184"/>
    </location>
</feature>
<feature type="helix" evidence="17">
    <location>
        <begin position="191"/>
        <end position="193"/>
    </location>
</feature>
<feature type="helix" evidence="17">
    <location>
        <begin position="200"/>
        <end position="206"/>
    </location>
</feature>
<protein>
    <recommendedName>
        <fullName evidence="15">Small ribosomal subunit protein uS4</fullName>
    </recommendedName>
    <alternativeName>
        <fullName>30S ribosomal protein S4</fullName>
    </alternativeName>
</protein>
<keyword id="KW-0002">3D-structure</keyword>
<keyword id="KW-0903">Direct protein sequencing</keyword>
<keyword id="KW-0479">Metal-binding</keyword>
<keyword id="KW-1185">Reference proteome</keyword>
<keyword id="KW-0687">Ribonucleoprotein</keyword>
<keyword id="KW-0689">Ribosomal protein</keyword>
<keyword id="KW-0694">RNA-binding</keyword>
<keyword id="KW-0699">rRNA-binding</keyword>
<keyword id="KW-0862">Zinc</keyword>
<accession>P80373</accession>
<accession>Q5SHR5</accession>
<accession>Q9Z9H7</accession>
<gene>
    <name type="primary">rpsD</name>
    <name type="synonym">rps4</name>
    <name type="ordered locus">TTHA1665</name>
</gene>
<evidence type="ECO:0000269" key="1">
    <source>
    </source>
</evidence>
<evidence type="ECO:0000269" key="2">
    <source>
    </source>
</evidence>
<evidence type="ECO:0000269" key="3">
    <source>
    </source>
</evidence>
<evidence type="ECO:0000269" key="4">
    <source>
    </source>
</evidence>
<evidence type="ECO:0000269" key="5">
    <source>
    </source>
</evidence>
<evidence type="ECO:0000269" key="6">
    <source>
    </source>
</evidence>
<evidence type="ECO:0000269" key="7">
    <source>
    </source>
</evidence>
<evidence type="ECO:0000269" key="8">
    <source>
    </source>
</evidence>
<evidence type="ECO:0000269" key="9">
    <source>
    </source>
</evidence>
<evidence type="ECO:0000269" key="10">
    <source>
    </source>
</evidence>
<evidence type="ECO:0000269" key="11">
    <source>
    </source>
</evidence>
<evidence type="ECO:0000269" key="12">
    <source>
    </source>
</evidence>
<evidence type="ECO:0000269" key="13">
    <source>
    </source>
</evidence>
<evidence type="ECO:0000269" key="14">
    <source>
    </source>
</evidence>
<evidence type="ECO:0000305" key="15"/>
<evidence type="ECO:0007829" key="16">
    <source>
        <dbReference type="PDB" id="2UUB"/>
    </source>
</evidence>
<evidence type="ECO:0007829" key="17">
    <source>
        <dbReference type="PDB" id="2VQE"/>
    </source>
</evidence>
<evidence type="ECO:0007829" key="18">
    <source>
        <dbReference type="PDB" id="4LF6"/>
    </source>
</evidence>
<evidence type="ECO:0007829" key="19">
    <source>
        <dbReference type="PDB" id="5IWA"/>
    </source>
</evidence>
<sequence>MGRYIGPVCRLCRREGVKLYLKGERCYSPKCAMERRPYPPGQHGQKRARRPSDYAVRLREKQKLRRIYGISERQFRNLFEEASKKKGVTGSVFLGLLESRLDNVVYRLGFAVSRRQARQLVRHGHITVNGRRVDLPSYRVRPGDEIAVAEKSRNLELIRQNLEAMKGRKVGPWLSLDVEGMKGKFLRLPDREDLALPVNEQLVIEFYSR</sequence>
<dbReference type="EMBL" id="AB024328">
    <property type="protein sequence ID" value="BAA75548.1"/>
    <property type="molecule type" value="Genomic_DNA"/>
</dbReference>
<dbReference type="EMBL" id="AP008226">
    <property type="protein sequence ID" value="BAD71488.1"/>
    <property type="molecule type" value="Genomic_DNA"/>
</dbReference>
<dbReference type="RefSeq" id="WP_011173699.1">
    <property type="nucleotide sequence ID" value="NC_006461.1"/>
</dbReference>
<dbReference type="RefSeq" id="YP_144931.1">
    <property type="nucleotide sequence ID" value="NC_006461.1"/>
</dbReference>
<dbReference type="PDB" id="1FJG">
    <property type="method" value="X-ray"/>
    <property type="resolution" value="3.00 A"/>
    <property type="chains" value="D=1-209"/>
</dbReference>
<dbReference type="PDB" id="1FKA">
    <property type="method" value="X-ray"/>
    <property type="resolution" value="3.30 A"/>
    <property type="chains" value="D=1-209"/>
</dbReference>
<dbReference type="PDB" id="1HNW">
    <property type="method" value="X-ray"/>
    <property type="resolution" value="3.40 A"/>
    <property type="chains" value="D=1-209"/>
</dbReference>
<dbReference type="PDB" id="1HNX">
    <property type="method" value="X-ray"/>
    <property type="resolution" value="3.40 A"/>
    <property type="chains" value="D=1-209"/>
</dbReference>
<dbReference type="PDB" id="1HNZ">
    <property type="method" value="X-ray"/>
    <property type="resolution" value="3.30 A"/>
    <property type="chains" value="D=1-209"/>
</dbReference>
<dbReference type="PDB" id="1HR0">
    <property type="method" value="X-ray"/>
    <property type="resolution" value="3.20 A"/>
    <property type="chains" value="D=1-209"/>
</dbReference>
<dbReference type="PDB" id="1I94">
    <property type="method" value="X-ray"/>
    <property type="resolution" value="3.20 A"/>
    <property type="chains" value="D=2-209"/>
</dbReference>
<dbReference type="PDB" id="1I95">
    <property type="method" value="X-ray"/>
    <property type="resolution" value="4.50 A"/>
    <property type="chains" value="D=2-209"/>
</dbReference>
<dbReference type="PDB" id="1I96">
    <property type="method" value="X-ray"/>
    <property type="resolution" value="4.20 A"/>
    <property type="chains" value="D=2-209"/>
</dbReference>
<dbReference type="PDB" id="1I97">
    <property type="method" value="X-ray"/>
    <property type="resolution" value="4.50 A"/>
    <property type="chains" value="D=2-209"/>
</dbReference>
<dbReference type="PDB" id="1IBK">
    <property type="method" value="X-ray"/>
    <property type="resolution" value="3.31 A"/>
    <property type="chains" value="D=1-209"/>
</dbReference>
<dbReference type="PDB" id="1IBL">
    <property type="method" value="X-ray"/>
    <property type="resolution" value="3.11 A"/>
    <property type="chains" value="D=1-209"/>
</dbReference>
<dbReference type="PDB" id="1IBM">
    <property type="method" value="X-ray"/>
    <property type="resolution" value="3.31 A"/>
    <property type="chains" value="D=1-209"/>
</dbReference>
<dbReference type="PDB" id="1J5E">
    <property type="method" value="X-ray"/>
    <property type="resolution" value="3.05 A"/>
    <property type="chains" value="D=2-209"/>
</dbReference>
<dbReference type="PDB" id="1JGO">
    <property type="method" value="X-ray"/>
    <property type="resolution" value="5.60 A"/>
    <property type="chains" value="G=1-209"/>
</dbReference>
<dbReference type="PDB" id="1JGP">
    <property type="method" value="X-ray"/>
    <property type="resolution" value="7.00 A"/>
    <property type="chains" value="G=1-209"/>
</dbReference>
<dbReference type="PDB" id="1JGQ">
    <property type="method" value="X-ray"/>
    <property type="resolution" value="5.00 A"/>
    <property type="chains" value="G=1-209"/>
</dbReference>
<dbReference type="PDB" id="1ML5">
    <property type="method" value="EM"/>
    <property type="resolution" value="14.00 A"/>
    <property type="chains" value="G=1-209"/>
</dbReference>
<dbReference type="PDB" id="1N32">
    <property type="method" value="X-ray"/>
    <property type="resolution" value="3.00 A"/>
    <property type="chains" value="D=2-209"/>
</dbReference>
<dbReference type="PDB" id="1N33">
    <property type="method" value="X-ray"/>
    <property type="resolution" value="3.35 A"/>
    <property type="chains" value="D=2-209"/>
</dbReference>
<dbReference type="PDB" id="1N34">
    <property type="method" value="X-ray"/>
    <property type="resolution" value="3.80 A"/>
    <property type="chains" value="D=2-209"/>
</dbReference>
<dbReference type="PDB" id="1N36">
    <property type="method" value="X-ray"/>
    <property type="resolution" value="3.65 A"/>
    <property type="chains" value="D=2-209"/>
</dbReference>
<dbReference type="PDB" id="1QD7">
    <property type="method" value="X-ray"/>
    <property type="resolution" value="5.50 A"/>
    <property type="chains" value="C=60-155"/>
</dbReference>
<dbReference type="PDB" id="1VVJ">
    <property type="method" value="X-ray"/>
    <property type="resolution" value="3.44 A"/>
    <property type="chains" value="QD/XD=1-209"/>
</dbReference>
<dbReference type="PDB" id="1VY4">
    <property type="method" value="X-ray"/>
    <property type="resolution" value="2.60 A"/>
    <property type="chains" value="AD/CD=1-209"/>
</dbReference>
<dbReference type="PDB" id="1VY5">
    <property type="method" value="X-ray"/>
    <property type="resolution" value="2.55 A"/>
    <property type="chains" value="AD/CD=1-209"/>
</dbReference>
<dbReference type="PDB" id="1VY6">
    <property type="method" value="X-ray"/>
    <property type="resolution" value="2.90 A"/>
    <property type="chains" value="AD/CD=1-209"/>
</dbReference>
<dbReference type="PDB" id="1VY7">
    <property type="method" value="X-ray"/>
    <property type="resolution" value="2.80 A"/>
    <property type="chains" value="AD/CD=1-209"/>
</dbReference>
<dbReference type="PDB" id="1XMO">
    <property type="method" value="X-ray"/>
    <property type="resolution" value="3.25 A"/>
    <property type="chains" value="D=1-209"/>
</dbReference>
<dbReference type="PDB" id="1XMQ">
    <property type="method" value="X-ray"/>
    <property type="resolution" value="3.00 A"/>
    <property type="chains" value="D=1-209"/>
</dbReference>
<dbReference type="PDB" id="1XNQ">
    <property type="method" value="X-ray"/>
    <property type="resolution" value="3.05 A"/>
    <property type="chains" value="D=1-209"/>
</dbReference>
<dbReference type="PDB" id="1XNR">
    <property type="method" value="X-ray"/>
    <property type="resolution" value="3.10 A"/>
    <property type="chains" value="D=1-209"/>
</dbReference>
<dbReference type="PDB" id="2E5L">
    <property type="method" value="X-ray"/>
    <property type="resolution" value="3.30 A"/>
    <property type="chains" value="D=2-209"/>
</dbReference>
<dbReference type="PDB" id="2F4V">
    <property type="method" value="X-ray"/>
    <property type="resolution" value="3.80 A"/>
    <property type="chains" value="D=1-209"/>
</dbReference>
<dbReference type="PDB" id="2HHH">
    <property type="method" value="X-ray"/>
    <property type="resolution" value="3.35 A"/>
    <property type="chains" value="D=1-209"/>
</dbReference>
<dbReference type="PDB" id="2UU9">
    <property type="method" value="X-ray"/>
    <property type="resolution" value="3.10 A"/>
    <property type="chains" value="D=2-209"/>
</dbReference>
<dbReference type="PDB" id="2UUA">
    <property type="method" value="X-ray"/>
    <property type="resolution" value="2.90 A"/>
    <property type="chains" value="D=2-209"/>
</dbReference>
<dbReference type="PDB" id="2UUB">
    <property type="method" value="X-ray"/>
    <property type="resolution" value="2.80 A"/>
    <property type="chains" value="D=2-209"/>
</dbReference>
<dbReference type="PDB" id="2UUC">
    <property type="method" value="X-ray"/>
    <property type="resolution" value="3.10 A"/>
    <property type="chains" value="D=2-209"/>
</dbReference>
<dbReference type="PDB" id="2UXB">
    <property type="method" value="X-ray"/>
    <property type="resolution" value="3.10 A"/>
    <property type="chains" value="D=2-209"/>
</dbReference>
<dbReference type="PDB" id="2UXC">
    <property type="method" value="X-ray"/>
    <property type="resolution" value="2.90 A"/>
    <property type="chains" value="D=2-209"/>
</dbReference>
<dbReference type="PDB" id="2UXD">
    <property type="method" value="X-ray"/>
    <property type="resolution" value="3.20 A"/>
    <property type="chains" value="D=2-209"/>
</dbReference>
<dbReference type="PDB" id="2VQE">
    <property type="method" value="X-ray"/>
    <property type="resolution" value="2.50 A"/>
    <property type="chains" value="D=1-209"/>
</dbReference>
<dbReference type="PDB" id="2VQF">
    <property type="method" value="X-ray"/>
    <property type="resolution" value="2.90 A"/>
    <property type="chains" value="D=1-209"/>
</dbReference>
<dbReference type="PDB" id="2ZM6">
    <property type="method" value="X-ray"/>
    <property type="resolution" value="3.30 A"/>
    <property type="chains" value="D=2-209"/>
</dbReference>
<dbReference type="PDB" id="3OTO">
    <property type="method" value="X-ray"/>
    <property type="resolution" value="3.69 A"/>
    <property type="chains" value="D=1-209"/>
</dbReference>
<dbReference type="PDB" id="3T1H">
    <property type="method" value="X-ray"/>
    <property type="resolution" value="3.11 A"/>
    <property type="chains" value="D=1-209"/>
</dbReference>
<dbReference type="PDB" id="3T1Y">
    <property type="method" value="X-ray"/>
    <property type="resolution" value="2.80 A"/>
    <property type="chains" value="D=1-209"/>
</dbReference>
<dbReference type="PDB" id="4AQY">
    <property type="method" value="X-ray"/>
    <property type="resolution" value="3.50 A"/>
    <property type="chains" value="D=2-209"/>
</dbReference>
<dbReference type="PDB" id="4B3M">
    <property type="method" value="X-ray"/>
    <property type="resolution" value="2.90 A"/>
    <property type="chains" value="D=2-209"/>
</dbReference>
<dbReference type="PDB" id="4B3R">
    <property type="method" value="X-ray"/>
    <property type="resolution" value="3.00 A"/>
    <property type="chains" value="D=2-209"/>
</dbReference>
<dbReference type="PDB" id="4B3S">
    <property type="method" value="X-ray"/>
    <property type="resolution" value="3.15 A"/>
    <property type="chains" value="D=2-209"/>
</dbReference>
<dbReference type="PDB" id="4B3T">
    <property type="method" value="X-ray"/>
    <property type="resolution" value="3.00 A"/>
    <property type="chains" value="D=2-209"/>
</dbReference>
<dbReference type="PDB" id="4DR1">
    <property type="method" value="X-ray"/>
    <property type="resolution" value="3.60 A"/>
    <property type="chains" value="D=1-209"/>
</dbReference>
<dbReference type="PDB" id="4DR2">
    <property type="method" value="X-ray"/>
    <property type="resolution" value="3.25 A"/>
    <property type="chains" value="D=1-209"/>
</dbReference>
<dbReference type="PDB" id="4DR3">
    <property type="method" value="X-ray"/>
    <property type="resolution" value="3.35 A"/>
    <property type="chains" value="D=1-209"/>
</dbReference>
<dbReference type="PDB" id="4DR4">
    <property type="method" value="X-ray"/>
    <property type="resolution" value="3.97 A"/>
    <property type="chains" value="D=1-209"/>
</dbReference>
<dbReference type="PDB" id="4DR5">
    <property type="method" value="X-ray"/>
    <property type="resolution" value="3.45 A"/>
    <property type="chains" value="D=1-209"/>
</dbReference>
<dbReference type="PDB" id="4DR6">
    <property type="method" value="X-ray"/>
    <property type="resolution" value="3.30 A"/>
    <property type="chains" value="D=1-209"/>
</dbReference>
<dbReference type="PDB" id="4DR7">
    <property type="method" value="X-ray"/>
    <property type="resolution" value="3.75 A"/>
    <property type="chains" value="D=1-209"/>
</dbReference>
<dbReference type="PDB" id="4DUY">
    <property type="method" value="X-ray"/>
    <property type="resolution" value="3.39 A"/>
    <property type="chains" value="D=1-209"/>
</dbReference>
<dbReference type="PDB" id="4DUZ">
    <property type="method" value="X-ray"/>
    <property type="resolution" value="3.65 A"/>
    <property type="chains" value="D=1-209"/>
</dbReference>
<dbReference type="PDB" id="4DV0">
    <property type="method" value="X-ray"/>
    <property type="resolution" value="3.85 A"/>
    <property type="chains" value="D=1-209"/>
</dbReference>
<dbReference type="PDB" id="4DV1">
    <property type="method" value="X-ray"/>
    <property type="resolution" value="3.85 A"/>
    <property type="chains" value="D=1-209"/>
</dbReference>
<dbReference type="PDB" id="4DV2">
    <property type="method" value="X-ray"/>
    <property type="resolution" value="3.65 A"/>
    <property type="chains" value="D=1-209"/>
</dbReference>
<dbReference type="PDB" id="4DV3">
    <property type="method" value="X-ray"/>
    <property type="resolution" value="3.55 A"/>
    <property type="chains" value="D=1-209"/>
</dbReference>
<dbReference type="PDB" id="4DV4">
    <property type="method" value="X-ray"/>
    <property type="resolution" value="3.65 A"/>
    <property type="chains" value="D=1-209"/>
</dbReference>
<dbReference type="PDB" id="4DV5">
    <property type="method" value="X-ray"/>
    <property type="resolution" value="3.68 A"/>
    <property type="chains" value="D=1-209"/>
</dbReference>
<dbReference type="PDB" id="4DV6">
    <property type="method" value="X-ray"/>
    <property type="resolution" value="3.30 A"/>
    <property type="chains" value="D=1-209"/>
</dbReference>
<dbReference type="PDB" id="4DV7">
    <property type="method" value="X-ray"/>
    <property type="resolution" value="3.29 A"/>
    <property type="chains" value="D=1-209"/>
</dbReference>
<dbReference type="PDB" id="4GKJ">
    <property type="method" value="X-ray"/>
    <property type="resolution" value="3.30 A"/>
    <property type="chains" value="D=2-209"/>
</dbReference>
<dbReference type="PDB" id="4GKK">
    <property type="method" value="X-ray"/>
    <property type="resolution" value="3.20 A"/>
    <property type="chains" value="D=2-209"/>
</dbReference>
<dbReference type="PDB" id="4JI0">
    <property type="method" value="X-ray"/>
    <property type="resolution" value="3.49 A"/>
    <property type="chains" value="D=1-209"/>
</dbReference>
<dbReference type="PDB" id="4JI1">
    <property type="method" value="X-ray"/>
    <property type="resolution" value="3.14 A"/>
    <property type="chains" value="D=1-209"/>
</dbReference>
<dbReference type="PDB" id="4JI2">
    <property type="method" value="X-ray"/>
    <property type="resolution" value="3.64 A"/>
    <property type="chains" value="D=1-209"/>
</dbReference>
<dbReference type="PDB" id="4JI3">
    <property type="method" value="X-ray"/>
    <property type="resolution" value="3.35 A"/>
    <property type="chains" value="D=1-209"/>
</dbReference>
<dbReference type="PDB" id="4JI4">
    <property type="method" value="X-ray"/>
    <property type="resolution" value="3.69 A"/>
    <property type="chains" value="D=1-209"/>
</dbReference>
<dbReference type="PDB" id="4JI5">
    <property type="method" value="X-ray"/>
    <property type="resolution" value="3.85 A"/>
    <property type="chains" value="D=1-209"/>
</dbReference>
<dbReference type="PDB" id="4JI6">
    <property type="method" value="X-ray"/>
    <property type="resolution" value="3.55 A"/>
    <property type="chains" value="D=1-209"/>
</dbReference>
<dbReference type="PDB" id="4JI7">
    <property type="method" value="X-ray"/>
    <property type="resolution" value="3.50 A"/>
    <property type="chains" value="D=1-209"/>
</dbReference>
<dbReference type="PDB" id="4JI8">
    <property type="method" value="X-ray"/>
    <property type="resolution" value="3.74 A"/>
    <property type="chains" value="D=1-209"/>
</dbReference>
<dbReference type="PDB" id="4JV5">
    <property type="method" value="X-ray"/>
    <property type="resolution" value="3.16 A"/>
    <property type="chains" value="D=2-209"/>
</dbReference>
<dbReference type="PDB" id="4JYA">
    <property type="method" value="X-ray"/>
    <property type="resolution" value="3.10 A"/>
    <property type="chains" value="D=2-209"/>
</dbReference>
<dbReference type="PDB" id="4K0K">
    <property type="method" value="X-ray"/>
    <property type="resolution" value="3.40 A"/>
    <property type="chains" value="D=2-209"/>
</dbReference>
<dbReference type="PDB" id="4KHP">
    <property type="method" value="X-ray"/>
    <property type="resolution" value="3.10 A"/>
    <property type="chains" value="D=2-209"/>
</dbReference>
<dbReference type="PDB" id="4L47">
    <property type="method" value="X-ray"/>
    <property type="resolution" value="3.22 A"/>
    <property type="chains" value="QD/XD=1-209"/>
</dbReference>
<dbReference type="PDB" id="4L71">
    <property type="method" value="X-ray"/>
    <property type="resolution" value="3.90 A"/>
    <property type="chains" value="QD/XD=1-209"/>
</dbReference>
<dbReference type="PDB" id="4LEL">
    <property type="method" value="X-ray"/>
    <property type="resolution" value="3.90 A"/>
    <property type="chains" value="QD/XD=1-209"/>
</dbReference>
<dbReference type="PDB" id="4LF4">
    <property type="method" value="X-ray"/>
    <property type="resolution" value="3.34 A"/>
    <property type="chains" value="D=1-209"/>
</dbReference>
<dbReference type="PDB" id="4LF5">
    <property type="method" value="X-ray"/>
    <property type="resolution" value="3.75 A"/>
    <property type="chains" value="D=1-209"/>
</dbReference>
<dbReference type="PDB" id="4LF6">
    <property type="method" value="X-ray"/>
    <property type="resolution" value="3.31 A"/>
    <property type="chains" value="D=1-209"/>
</dbReference>
<dbReference type="PDB" id="4LF7">
    <property type="method" value="X-ray"/>
    <property type="resolution" value="3.15 A"/>
    <property type="chains" value="D=1-209"/>
</dbReference>
<dbReference type="PDB" id="4LF8">
    <property type="method" value="X-ray"/>
    <property type="resolution" value="3.15 A"/>
    <property type="chains" value="D=1-209"/>
</dbReference>
<dbReference type="PDB" id="4LF9">
    <property type="method" value="X-ray"/>
    <property type="resolution" value="3.28 A"/>
    <property type="chains" value="D=1-209"/>
</dbReference>
<dbReference type="PDB" id="4LFA">
    <property type="method" value="X-ray"/>
    <property type="resolution" value="3.65 A"/>
    <property type="chains" value="D=1-209"/>
</dbReference>
<dbReference type="PDB" id="4LFB">
    <property type="method" value="X-ray"/>
    <property type="resolution" value="3.01 A"/>
    <property type="chains" value="D=1-209"/>
</dbReference>
<dbReference type="PDB" id="4LFC">
    <property type="method" value="X-ray"/>
    <property type="resolution" value="3.60 A"/>
    <property type="chains" value="D=1-209"/>
</dbReference>
<dbReference type="PDB" id="4LFZ">
    <property type="method" value="X-ray"/>
    <property type="resolution" value="3.92 A"/>
    <property type="chains" value="QD/XD=1-209"/>
</dbReference>
<dbReference type="PDB" id="4LNT">
    <property type="method" value="X-ray"/>
    <property type="resolution" value="2.94 A"/>
    <property type="chains" value="QD/XD=1-209"/>
</dbReference>
<dbReference type="PDB" id="4LSK">
    <property type="method" value="X-ray"/>
    <property type="resolution" value="3.48 A"/>
    <property type="chains" value="QD/XD=1-209"/>
</dbReference>
<dbReference type="PDB" id="4LT8">
    <property type="method" value="X-ray"/>
    <property type="resolution" value="3.14 A"/>
    <property type="chains" value="QD/XD=1-209"/>
</dbReference>
<dbReference type="PDB" id="4NXM">
    <property type="method" value="X-ray"/>
    <property type="resolution" value="3.65 A"/>
    <property type="chains" value="D=1-209"/>
</dbReference>
<dbReference type="PDB" id="4NXN">
    <property type="method" value="X-ray"/>
    <property type="resolution" value="3.54 A"/>
    <property type="chains" value="D=1-209"/>
</dbReference>
<dbReference type="PDB" id="4OX9">
    <property type="method" value="X-ray"/>
    <property type="resolution" value="3.80 A"/>
    <property type="chains" value="D=2-209"/>
</dbReference>
<dbReference type="PDB" id="4P6F">
    <property type="method" value="X-ray"/>
    <property type="resolution" value="3.60 A"/>
    <property type="chains" value="QD/XD=1-209"/>
</dbReference>
<dbReference type="PDB" id="4P70">
    <property type="method" value="X-ray"/>
    <property type="resolution" value="3.68 A"/>
    <property type="chains" value="QD/XD=1-209"/>
</dbReference>
<dbReference type="PDB" id="4TUA">
    <property type="method" value="X-ray"/>
    <property type="resolution" value="3.60 A"/>
    <property type="chains" value="QD/XD=1-209"/>
</dbReference>
<dbReference type="PDB" id="4TUB">
    <property type="method" value="X-ray"/>
    <property type="resolution" value="3.60 A"/>
    <property type="chains" value="QD/XD=1-209"/>
</dbReference>
<dbReference type="PDB" id="4TUC">
    <property type="method" value="X-ray"/>
    <property type="resolution" value="3.60 A"/>
    <property type="chains" value="QD/XD=1-209"/>
</dbReference>
<dbReference type="PDB" id="4TUD">
    <property type="method" value="X-ray"/>
    <property type="resolution" value="3.60 A"/>
    <property type="chains" value="QD/XD=1-209"/>
</dbReference>
<dbReference type="PDB" id="4TUE">
    <property type="method" value="X-ray"/>
    <property type="resolution" value="3.50 A"/>
    <property type="chains" value="QD/XD=1-209"/>
</dbReference>
<dbReference type="PDB" id="4V42">
    <property type="method" value="X-ray"/>
    <property type="resolution" value="5.50 A"/>
    <property type="chains" value="AG=1-209"/>
</dbReference>
<dbReference type="PDB" id="4V49">
    <property type="method" value="X-ray"/>
    <property type="resolution" value="8.70 A"/>
    <property type="chains" value="D=2-209"/>
</dbReference>
<dbReference type="PDB" id="4V4A">
    <property type="method" value="X-ray"/>
    <property type="resolution" value="9.50 A"/>
    <property type="chains" value="D=2-209"/>
</dbReference>
<dbReference type="PDB" id="4V4I">
    <property type="method" value="X-ray"/>
    <property type="resolution" value="3.71 A"/>
    <property type="chains" value="e=1-209"/>
</dbReference>
<dbReference type="PDB" id="4V4P">
    <property type="method" value="X-ray"/>
    <property type="resolution" value="5.50 A"/>
    <property type="chains" value="BG=1-209"/>
</dbReference>
<dbReference type="PDB" id="4V4R">
    <property type="method" value="X-ray"/>
    <property type="resolution" value="5.90 A"/>
    <property type="chains" value="AD=1-209"/>
</dbReference>
<dbReference type="PDB" id="4V4S">
    <property type="method" value="X-ray"/>
    <property type="resolution" value="6.76 A"/>
    <property type="chains" value="AD=1-209"/>
</dbReference>
<dbReference type="PDB" id="4V4T">
    <property type="method" value="X-ray"/>
    <property type="resolution" value="6.46 A"/>
    <property type="chains" value="AD=1-209"/>
</dbReference>
<dbReference type="PDB" id="4V4X">
    <property type="method" value="X-ray"/>
    <property type="resolution" value="5.00 A"/>
    <property type="chains" value="AG=1-209"/>
</dbReference>
<dbReference type="PDB" id="4V4Y">
    <property type="method" value="X-ray"/>
    <property type="resolution" value="5.50 A"/>
    <property type="chains" value="AG=1-209"/>
</dbReference>
<dbReference type="PDB" id="4V4Z">
    <property type="method" value="X-ray"/>
    <property type="resolution" value="4.51 A"/>
    <property type="chains" value="AG=1-209"/>
</dbReference>
<dbReference type="PDB" id="4V51">
    <property type="method" value="X-ray"/>
    <property type="resolution" value="2.80 A"/>
    <property type="chains" value="AD/CD=2-209"/>
</dbReference>
<dbReference type="PDB" id="4V5A">
    <property type="method" value="X-ray"/>
    <property type="resolution" value="3.50 A"/>
    <property type="chains" value="AD/CD=2-209"/>
</dbReference>
<dbReference type="PDB" id="4V5C">
    <property type="method" value="X-ray"/>
    <property type="resolution" value="3.30 A"/>
    <property type="chains" value="AD/CD=1-209"/>
</dbReference>
<dbReference type="PDB" id="4V5D">
    <property type="method" value="X-ray"/>
    <property type="resolution" value="3.50 A"/>
    <property type="chains" value="AD/CD=1-209"/>
</dbReference>
<dbReference type="PDB" id="4V5E">
    <property type="method" value="X-ray"/>
    <property type="resolution" value="3.45 A"/>
    <property type="chains" value="AD/CD=1-209"/>
</dbReference>
<dbReference type="PDB" id="4V5F">
    <property type="method" value="X-ray"/>
    <property type="resolution" value="3.60 A"/>
    <property type="chains" value="AD/CD=1-209"/>
</dbReference>
<dbReference type="PDB" id="4V5G">
    <property type="method" value="X-ray"/>
    <property type="resolution" value="3.60 A"/>
    <property type="chains" value="AD/CD=1-209"/>
</dbReference>
<dbReference type="PDB" id="4V5J">
    <property type="method" value="X-ray"/>
    <property type="resolution" value="3.10 A"/>
    <property type="chains" value="AD/CD=1-209"/>
</dbReference>
<dbReference type="PDB" id="4V5K">
    <property type="method" value="X-ray"/>
    <property type="resolution" value="3.20 A"/>
    <property type="chains" value="AD/CD=1-209"/>
</dbReference>
<dbReference type="PDB" id="4V5L">
    <property type="method" value="X-ray"/>
    <property type="resolution" value="3.10 A"/>
    <property type="chains" value="AD=1-209"/>
</dbReference>
<dbReference type="PDB" id="4V5M">
    <property type="method" value="EM"/>
    <property type="resolution" value="7.80 A"/>
    <property type="chains" value="AD=1-209"/>
</dbReference>
<dbReference type="PDB" id="4V5N">
    <property type="method" value="EM"/>
    <property type="resolution" value="7.60 A"/>
    <property type="chains" value="AD=1-209"/>
</dbReference>
<dbReference type="PDB" id="4V5P">
    <property type="method" value="X-ray"/>
    <property type="resolution" value="3.10 A"/>
    <property type="chains" value="AD/CD=1-209"/>
</dbReference>
<dbReference type="PDB" id="4V5Q">
    <property type="method" value="X-ray"/>
    <property type="resolution" value="3.10 A"/>
    <property type="chains" value="AD/CD=1-209"/>
</dbReference>
<dbReference type="PDB" id="4V5R">
    <property type="method" value="X-ray"/>
    <property type="resolution" value="3.10 A"/>
    <property type="chains" value="AD/CD=1-209"/>
</dbReference>
<dbReference type="PDB" id="4V5S">
    <property type="method" value="X-ray"/>
    <property type="resolution" value="3.10 A"/>
    <property type="chains" value="AD/CD=1-209"/>
</dbReference>
<dbReference type="PDB" id="4V68">
    <property type="method" value="EM"/>
    <property type="resolution" value="6.40 A"/>
    <property type="chains" value="AD=2-209"/>
</dbReference>
<dbReference type="PDB" id="4V6A">
    <property type="method" value="X-ray"/>
    <property type="resolution" value="3.10 A"/>
    <property type="chains" value="AD/CD=1-209"/>
</dbReference>
<dbReference type="PDB" id="4V6F">
    <property type="method" value="X-ray"/>
    <property type="resolution" value="3.10 A"/>
    <property type="chains" value="BG/CG=1-209"/>
</dbReference>
<dbReference type="PDB" id="4V6G">
    <property type="method" value="X-ray"/>
    <property type="resolution" value="3.50 A"/>
    <property type="chains" value="AG/CG=1-209"/>
</dbReference>
<dbReference type="PDB" id="4V7J">
    <property type="method" value="X-ray"/>
    <property type="resolution" value="3.30 A"/>
    <property type="chains" value="Ad/Bd=1-209"/>
</dbReference>
<dbReference type="PDB" id="4V7K">
    <property type="method" value="X-ray"/>
    <property type="resolution" value="3.60 A"/>
    <property type="chains" value="Ad/Bd=1-209"/>
</dbReference>
<dbReference type="PDB" id="4V7L">
    <property type="method" value="X-ray"/>
    <property type="resolution" value="3.00 A"/>
    <property type="chains" value="AD/CD=1-209"/>
</dbReference>
<dbReference type="PDB" id="4V7M">
    <property type="method" value="X-ray"/>
    <property type="resolution" value="3.45 A"/>
    <property type="chains" value="AD/CD=1-209"/>
</dbReference>
<dbReference type="PDB" id="4V7W">
    <property type="method" value="X-ray"/>
    <property type="resolution" value="3.00 A"/>
    <property type="chains" value="AD/CD=1-209"/>
</dbReference>
<dbReference type="PDB" id="4V7X">
    <property type="method" value="X-ray"/>
    <property type="resolution" value="3.00 A"/>
    <property type="chains" value="AD/CD=1-209"/>
</dbReference>
<dbReference type="PDB" id="4V7Y">
    <property type="method" value="X-ray"/>
    <property type="resolution" value="3.00 A"/>
    <property type="chains" value="AD/CD=1-209"/>
</dbReference>
<dbReference type="PDB" id="4V7Z">
    <property type="method" value="X-ray"/>
    <property type="resolution" value="3.10 A"/>
    <property type="chains" value="AD/CD=1-209"/>
</dbReference>
<dbReference type="PDB" id="4V87">
    <property type="method" value="X-ray"/>
    <property type="resolution" value="3.10 A"/>
    <property type="chains" value="BG/CG=2-209"/>
</dbReference>
<dbReference type="PDB" id="4V8A">
    <property type="method" value="X-ray"/>
    <property type="resolution" value="3.20 A"/>
    <property type="chains" value="CD/DD=1-209"/>
</dbReference>
<dbReference type="PDB" id="4V8B">
    <property type="method" value="X-ray"/>
    <property type="resolution" value="3.00 A"/>
    <property type="chains" value="AG/CG=2-209"/>
</dbReference>
<dbReference type="PDB" id="4V8C">
    <property type="method" value="X-ray"/>
    <property type="resolution" value="3.30 A"/>
    <property type="chains" value="CG/DG=2-209"/>
</dbReference>
<dbReference type="PDB" id="4V8D">
    <property type="method" value="X-ray"/>
    <property type="resolution" value="3.00 A"/>
    <property type="chains" value="AG/CG=2-209"/>
</dbReference>
<dbReference type="PDB" id="4V8E">
    <property type="method" value="X-ray"/>
    <property type="resolution" value="3.30 A"/>
    <property type="chains" value="BG/DG=2-209"/>
</dbReference>
<dbReference type="PDB" id="4V8F">
    <property type="method" value="X-ray"/>
    <property type="resolution" value="3.30 A"/>
    <property type="chains" value="BG/CG=2-209"/>
</dbReference>
<dbReference type="PDB" id="4V8G">
    <property type="method" value="X-ray"/>
    <property type="resolution" value="3.00 A"/>
    <property type="chains" value="AD/CD=1-209"/>
</dbReference>
<dbReference type="PDB" id="4V8H">
    <property type="method" value="X-ray"/>
    <property type="resolution" value="3.10 A"/>
    <property type="chains" value="AD/CD=1-209"/>
</dbReference>
<dbReference type="PDB" id="4V8I">
    <property type="method" value="X-ray"/>
    <property type="resolution" value="2.70 A"/>
    <property type="chains" value="AD/CD=1-209"/>
</dbReference>
<dbReference type="PDB" id="4V8J">
    <property type="method" value="X-ray"/>
    <property type="resolution" value="3.90 A"/>
    <property type="chains" value="AD/CD=1-209"/>
</dbReference>
<dbReference type="PDB" id="4V8N">
    <property type="method" value="X-ray"/>
    <property type="resolution" value="3.10 A"/>
    <property type="chains" value="AD/CD=1-209"/>
</dbReference>
<dbReference type="PDB" id="4V8O">
    <property type="method" value="X-ray"/>
    <property type="resolution" value="3.80 A"/>
    <property type="chains" value="AD=1-209"/>
</dbReference>
<dbReference type="PDB" id="4V8Q">
    <property type="method" value="X-ray"/>
    <property type="resolution" value="3.10 A"/>
    <property type="chains" value="BD=1-209"/>
</dbReference>
<dbReference type="PDB" id="4V8U">
    <property type="method" value="X-ray"/>
    <property type="resolution" value="3.70 A"/>
    <property type="chains" value="AD/CD=1-209"/>
</dbReference>
<dbReference type="PDB" id="4V8X">
    <property type="method" value="X-ray"/>
    <property type="resolution" value="3.35 A"/>
    <property type="chains" value="AD/CD=1-209"/>
</dbReference>
<dbReference type="PDB" id="4V90">
    <property type="method" value="X-ray"/>
    <property type="resolution" value="2.95 A"/>
    <property type="chains" value="AD=1-209"/>
</dbReference>
<dbReference type="PDB" id="4V95">
    <property type="method" value="X-ray"/>
    <property type="resolution" value="3.20 A"/>
    <property type="chains" value="AD/CD=1-209"/>
</dbReference>
<dbReference type="PDB" id="4V97">
    <property type="method" value="X-ray"/>
    <property type="resolution" value="3.52 A"/>
    <property type="chains" value="AD/CD=1-209"/>
</dbReference>
<dbReference type="PDB" id="4V9A">
    <property type="method" value="X-ray"/>
    <property type="resolution" value="3.30 A"/>
    <property type="chains" value="AG/CG=2-209"/>
</dbReference>
<dbReference type="PDB" id="4V9B">
    <property type="method" value="X-ray"/>
    <property type="resolution" value="3.10 A"/>
    <property type="chains" value="AG/CG=2-209"/>
</dbReference>
<dbReference type="PDB" id="4V9H">
    <property type="method" value="X-ray"/>
    <property type="resolution" value="2.86 A"/>
    <property type="chains" value="AD=2-209"/>
</dbReference>
<dbReference type="PDB" id="4V9I">
    <property type="method" value="X-ray"/>
    <property type="resolution" value="3.30 A"/>
    <property type="chains" value="AD/CD=2-209"/>
</dbReference>
<dbReference type="PDB" id="4V9R">
    <property type="method" value="X-ray"/>
    <property type="resolution" value="3.00 A"/>
    <property type="chains" value="AD/CD=1-209"/>
</dbReference>
<dbReference type="PDB" id="4V9S">
    <property type="method" value="X-ray"/>
    <property type="resolution" value="3.10 A"/>
    <property type="chains" value="AD/CD=1-209"/>
</dbReference>
<dbReference type="PDB" id="4W2E">
    <property type="method" value="X-ray"/>
    <property type="resolution" value="2.90 A"/>
    <property type="chains" value="d=1-209"/>
</dbReference>
<dbReference type="PDB" id="4W2F">
    <property type="method" value="X-ray"/>
    <property type="resolution" value="2.40 A"/>
    <property type="chains" value="AD/CD=1-209"/>
</dbReference>
<dbReference type="PDB" id="4W2G">
    <property type="method" value="X-ray"/>
    <property type="resolution" value="2.55 A"/>
    <property type="chains" value="AD/CD=1-209"/>
</dbReference>
<dbReference type="PDB" id="4W2H">
    <property type="method" value="X-ray"/>
    <property type="resolution" value="2.70 A"/>
    <property type="chains" value="AD/CD=1-209"/>
</dbReference>
<dbReference type="PDB" id="4W2I">
    <property type="method" value="X-ray"/>
    <property type="resolution" value="2.70 A"/>
    <property type="chains" value="AD/CD=1-209"/>
</dbReference>
<dbReference type="PDB" id="4W4G">
    <property type="method" value="X-ray"/>
    <property type="resolution" value="3.30 A"/>
    <property type="chains" value="QD/XD=1-209"/>
</dbReference>
<dbReference type="PDB" id="4WPO">
    <property type="method" value="X-ray"/>
    <property type="resolution" value="2.80 A"/>
    <property type="chains" value="BD/DD=1-209"/>
</dbReference>
<dbReference type="PDB" id="4WQ1">
    <property type="method" value="X-ray"/>
    <property type="resolution" value="3.10 A"/>
    <property type="chains" value="32/3E=2-209"/>
</dbReference>
<dbReference type="PDB" id="4WQF">
    <property type="method" value="X-ray"/>
    <property type="resolution" value="2.80 A"/>
    <property type="chains" value="BD/DD=1-209"/>
</dbReference>
<dbReference type="PDB" id="4WQR">
    <property type="method" value="X-ray"/>
    <property type="resolution" value="3.15 A"/>
    <property type="chains" value="32/3E=1-209"/>
</dbReference>
<dbReference type="PDB" id="4WQU">
    <property type="method" value="X-ray"/>
    <property type="resolution" value="2.80 A"/>
    <property type="chains" value="BD/DD=1-209"/>
</dbReference>
<dbReference type="PDB" id="4WQY">
    <property type="method" value="X-ray"/>
    <property type="resolution" value="2.80 A"/>
    <property type="chains" value="BD/DD=1-209"/>
</dbReference>
<dbReference type="PDB" id="4WR6">
    <property type="method" value="X-ray"/>
    <property type="resolution" value="3.05 A"/>
    <property type="chains" value="32/3E=1-209"/>
</dbReference>
<dbReference type="PDB" id="4WRA">
    <property type="method" value="X-ray"/>
    <property type="resolution" value="3.05 A"/>
    <property type="chains" value="32/3E=1-209"/>
</dbReference>
<dbReference type="PDB" id="4WRO">
    <property type="method" value="X-ray"/>
    <property type="resolution" value="3.05 A"/>
    <property type="chains" value="32/3E=1-209"/>
</dbReference>
<dbReference type="PDB" id="4WSD">
    <property type="method" value="X-ray"/>
    <property type="resolution" value="2.95 A"/>
    <property type="chains" value="32/3E=1-209"/>
</dbReference>
<dbReference type="PDB" id="4WSM">
    <property type="method" value="X-ray"/>
    <property type="resolution" value="3.30 A"/>
    <property type="chains" value="32/3E=1-209"/>
</dbReference>
<dbReference type="PDB" id="4WT1">
    <property type="method" value="X-ray"/>
    <property type="resolution" value="3.05 A"/>
    <property type="chains" value="32/3E=1-209"/>
</dbReference>
<dbReference type="PDB" id="4WT8">
    <property type="method" value="X-ray"/>
    <property type="resolution" value="3.40 A"/>
    <property type="chains" value="AD/BD=2-209"/>
</dbReference>
<dbReference type="PDB" id="4WU1">
    <property type="method" value="X-ray"/>
    <property type="resolution" value="3.20 A"/>
    <property type="chains" value="32/3E=1-209"/>
</dbReference>
<dbReference type="PDB" id="4WZD">
    <property type="method" value="X-ray"/>
    <property type="resolution" value="3.10 A"/>
    <property type="chains" value="32/3E=1-209"/>
</dbReference>
<dbReference type="PDB" id="4WZO">
    <property type="method" value="X-ray"/>
    <property type="resolution" value="3.30 A"/>
    <property type="chains" value="32/3E=1-209"/>
</dbReference>
<dbReference type="PDB" id="4X62">
    <property type="method" value="X-ray"/>
    <property type="resolution" value="3.45 A"/>
    <property type="chains" value="D=2-209"/>
</dbReference>
<dbReference type="PDB" id="4X64">
    <property type="method" value="X-ray"/>
    <property type="resolution" value="3.35 A"/>
    <property type="chains" value="D=2-209"/>
</dbReference>
<dbReference type="PDB" id="4X65">
    <property type="method" value="X-ray"/>
    <property type="resolution" value="3.35 A"/>
    <property type="chains" value="D=2-209"/>
</dbReference>
<dbReference type="PDB" id="4X66">
    <property type="method" value="X-ray"/>
    <property type="resolution" value="3.45 A"/>
    <property type="chains" value="D=2-209"/>
</dbReference>
<dbReference type="PDB" id="4Y4O">
    <property type="method" value="X-ray"/>
    <property type="resolution" value="2.30 A"/>
    <property type="chains" value="1d/2d=1-209"/>
</dbReference>
<dbReference type="PDB" id="4Y4P">
    <property type="method" value="X-ray"/>
    <property type="resolution" value="2.50 A"/>
    <property type="chains" value="1d/2d=1-209"/>
</dbReference>
<dbReference type="PDB" id="4YHH">
    <property type="method" value="X-ray"/>
    <property type="resolution" value="3.42 A"/>
    <property type="chains" value="D=2-209"/>
</dbReference>
<dbReference type="PDB" id="4YPB">
    <property type="method" value="X-ray"/>
    <property type="resolution" value="3.40 A"/>
    <property type="chains" value="QD/XD=1-209"/>
</dbReference>
<dbReference type="PDB" id="4YY3">
    <property type="method" value="X-ray"/>
    <property type="resolution" value="3.60 A"/>
    <property type="chains" value="D=1-209"/>
</dbReference>
<dbReference type="PDB" id="4YZV">
    <property type="method" value="X-ray"/>
    <property type="resolution" value="3.10 A"/>
    <property type="chains" value="QD/XD=1-209"/>
</dbReference>
<dbReference type="PDB" id="4Z3S">
    <property type="method" value="X-ray"/>
    <property type="resolution" value="2.65 A"/>
    <property type="chains" value="1d/2d=1-209"/>
</dbReference>
<dbReference type="PDB" id="4Z8C">
    <property type="method" value="X-ray"/>
    <property type="resolution" value="2.90 A"/>
    <property type="chains" value="1d/2d=1-209"/>
</dbReference>
<dbReference type="PDB" id="4ZER">
    <property type="method" value="X-ray"/>
    <property type="resolution" value="3.10 A"/>
    <property type="chains" value="1d/2d=2-209"/>
</dbReference>
<dbReference type="PDB" id="4ZSN">
    <property type="method" value="X-ray"/>
    <property type="resolution" value="3.60 A"/>
    <property type="chains" value="QD/XD=1-209"/>
</dbReference>
<dbReference type="PDB" id="5A9Z">
    <property type="method" value="EM"/>
    <property type="resolution" value="4.70 A"/>
    <property type="chains" value="BH=2-209"/>
</dbReference>
<dbReference type="PDB" id="5AA0">
    <property type="method" value="EM"/>
    <property type="resolution" value="5.00 A"/>
    <property type="chains" value="BH=2-209"/>
</dbReference>
<dbReference type="PDB" id="5BR8">
    <property type="method" value="X-ray"/>
    <property type="resolution" value="3.40 A"/>
    <property type="chains" value="D=1-209"/>
</dbReference>
<dbReference type="PDB" id="5CZP">
    <property type="method" value="X-ray"/>
    <property type="resolution" value="3.30 A"/>
    <property type="chains" value="QD/XD=1-209"/>
</dbReference>
<dbReference type="PDB" id="5D8B">
    <property type="method" value="X-ray"/>
    <property type="resolution" value="3.63 A"/>
    <property type="chains" value="AC/EA=1-209"/>
</dbReference>
<dbReference type="PDB" id="5DFE">
    <property type="method" value="X-ray"/>
    <property type="resolution" value="3.10 A"/>
    <property type="chains" value="QD/XD=1-209"/>
</dbReference>
<dbReference type="PDB" id="5DOX">
    <property type="method" value="X-ray"/>
    <property type="resolution" value="3.10 A"/>
    <property type="chains" value="1d/2d=1-209"/>
</dbReference>
<dbReference type="PDB" id="5DOY">
    <property type="method" value="X-ray"/>
    <property type="resolution" value="2.60 A"/>
    <property type="chains" value="1d/2d=1-209"/>
</dbReference>
<dbReference type="PDB" id="5E7K">
    <property type="method" value="X-ray"/>
    <property type="resolution" value="3.20 A"/>
    <property type="chains" value="32/3E=1-209"/>
</dbReference>
<dbReference type="PDB" id="5E81">
    <property type="method" value="X-ray"/>
    <property type="resolution" value="2.95 A"/>
    <property type="chains" value="32/3E=1-209"/>
</dbReference>
<dbReference type="PDB" id="5EL4">
    <property type="method" value="X-ray"/>
    <property type="resolution" value="3.15 A"/>
    <property type="chains" value="32/3E=1-209"/>
</dbReference>
<dbReference type="PDB" id="5EL5">
    <property type="method" value="X-ray"/>
    <property type="resolution" value="3.15 A"/>
    <property type="chains" value="32/3E=1-209"/>
</dbReference>
<dbReference type="PDB" id="5EL6">
    <property type="method" value="X-ray"/>
    <property type="resolution" value="3.10 A"/>
    <property type="chains" value="32/3E=1-209"/>
</dbReference>
<dbReference type="PDB" id="5EL7">
    <property type="method" value="X-ray"/>
    <property type="resolution" value="3.15 A"/>
    <property type="chains" value="32/3E=1-209"/>
</dbReference>
<dbReference type="PDB" id="5F8K">
    <property type="method" value="X-ray"/>
    <property type="resolution" value="2.80 A"/>
    <property type="chains" value="1d/2d=2-209"/>
</dbReference>
<dbReference type="PDB" id="5FDU">
    <property type="method" value="X-ray"/>
    <property type="resolution" value="2.90 A"/>
    <property type="chains" value="1d/2d=2-209"/>
</dbReference>
<dbReference type="PDB" id="5FDV">
    <property type="method" value="X-ray"/>
    <property type="resolution" value="2.80 A"/>
    <property type="chains" value="1d/2d=2-209"/>
</dbReference>
<dbReference type="PDB" id="5HAU">
    <property type="method" value="X-ray"/>
    <property type="resolution" value="3.00 A"/>
    <property type="chains" value="1d/2d=1-209"/>
</dbReference>
<dbReference type="PDB" id="5HCP">
    <property type="method" value="X-ray"/>
    <property type="resolution" value="2.89 A"/>
    <property type="chains" value="1d/2d=1-209"/>
</dbReference>
<dbReference type="PDB" id="5HCQ">
    <property type="method" value="X-ray"/>
    <property type="resolution" value="2.80 A"/>
    <property type="chains" value="1d/2d=1-209"/>
</dbReference>
<dbReference type="PDB" id="5HCR">
    <property type="method" value="X-ray"/>
    <property type="resolution" value="2.80 A"/>
    <property type="chains" value="1d/2d=1-209"/>
</dbReference>
<dbReference type="PDB" id="5HD1">
    <property type="method" value="X-ray"/>
    <property type="resolution" value="2.70 A"/>
    <property type="chains" value="1d/2d=1-209"/>
</dbReference>
<dbReference type="PDB" id="5IB7">
    <property type="method" value="X-ray"/>
    <property type="resolution" value="2.99 A"/>
    <property type="chains" value="32/3E=1-209"/>
</dbReference>
<dbReference type="PDB" id="5IB8">
    <property type="method" value="X-ray"/>
    <property type="resolution" value="3.13 A"/>
    <property type="chains" value="32/3E=1-209"/>
</dbReference>
<dbReference type="PDB" id="5IBB">
    <property type="method" value="X-ray"/>
    <property type="resolution" value="2.96 A"/>
    <property type="chains" value="32/3E=1-209"/>
</dbReference>
<dbReference type="PDB" id="5IMQ">
    <property type="method" value="EM"/>
    <property type="resolution" value="3.80 A"/>
    <property type="chains" value="H=1-209"/>
</dbReference>
<dbReference type="PDB" id="5IMR">
    <property type="method" value="EM"/>
    <property type="chains" value="H=1-209"/>
</dbReference>
<dbReference type="PDB" id="5IWA">
    <property type="method" value="X-ray"/>
    <property type="resolution" value="3.50 A"/>
    <property type="chains" value="D=2-209"/>
</dbReference>
<dbReference type="PDB" id="5J30">
    <property type="method" value="X-ray"/>
    <property type="resolution" value="3.20 A"/>
    <property type="chains" value="QD/XD=1-209"/>
</dbReference>
<dbReference type="PDB" id="5J3C">
    <property type="method" value="X-ray"/>
    <property type="resolution" value="3.04 A"/>
    <property type="chains" value="QD/XD=1-209"/>
</dbReference>
<dbReference type="PDB" id="5J4B">
    <property type="method" value="X-ray"/>
    <property type="resolution" value="2.60 A"/>
    <property type="chains" value="1d/2d=1-209"/>
</dbReference>
<dbReference type="PDB" id="5J4C">
    <property type="method" value="X-ray"/>
    <property type="resolution" value="2.80 A"/>
    <property type="chains" value="1d/2d=1-209"/>
</dbReference>
<dbReference type="PDB" id="5J8B">
    <property type="method" value="X-ray"/>
    <property type="resolution" value="2.60 A"/>
    <property type="chains" value="d=1-209"/>
</dbReference>
<dbReference type="PDB" id="5LMN">
    <property type="method" value="EM"/>
    <property type="resolution" value="3.55 A"/>
    <property type="chains" value="D=1-209"/>
</dbReference>
<dbReference type="PDB" id="5LMO">
    <property type="method" value="EM"/>
    <property type="resolution" value="4.30 A"/>
    <property type="chains" value="D=1-209"/>
</dbReference>
<dbReference type="PDB" id="5LMP">
    <property type="method" value="EM"/>
    <property type="resolution" value="5.35 A"/>
    <property type="chains" value="D=1-209"/>
</dbReference>
<dbReference type="PDB" id="5LMQ">
    <property type="method" value="EM"/>
    <property type="resolution" value="4.20 A"/>
    <property type="chains" value="D=1-209"/>
</dbReference>
<dbReference type="PDB" id="5LMR">
    <property type="method" value="EM"/>
    <property type="resolution" value="4.45 A"/>
    <property type="chains" value="D=1-209"/>
</dbReference>
<dbReference type="PDB" id="5LMS">
    <property type="method" value="EM"/>
    <property type="resolution" value="5.10 A"/>
    <property type="chains" value="D=1-209"/>
</dbReference>
<dbReference type="PDB" id="5LMT">
    <property type="method" value="EM"/>
    <property type="resolution" value="4.15 A"/>
    <property type="chains" value="D=1-209"/>
</dbReference>
<dbReference type="PDB" id="5LMU">
    <property type="method" value="EM"/>
    <property type="resolution" value="4.00 A"/>
    <property type="chains" value="D=1-209"/>
</dbReference>
<dbReference type="PDB" id="5LMV">
    <property type="method" value="EM"/>
    <property type="resolution" value="4.90 A"/>
    <property type="chains" value="D=1-209"/>
</dbReference>
<dbReference type="PDB" id="5NDJ">
    <property type="method" value="X-ray"/>
    <property type="resolution" value="3.15 A"/>
    <property type="chains" value="32/3E=1-209"/>
</dbReference>
<dbReference type="PDB" id="5NDK">
    <property type="method" value="X-ray"/>
    <property type="resolution" value="2.95 A"/>
    <property type="chains" value="32/3E=1-209"/>
</dbReference>
<dbReference type="PDB" id="5OT7">
    <property type="method" value="EM"/>
    <property type="resolution" value="3.80 A"/>
    <property type="chains" value="C=2-209"/>
</dbReference>
<dbReference type="PDB" id="5UQ7">
    <property type="method" value="EM"/>
    <property type="resolution" value="3.50 A"/>
    <property type="chains" value="d=2-209"/>
</dbReference>
<dbReference type="PDB" id="5UQ8">
    <property type="method" value="EM"/>
    <property type="resolution" value="3.20 A"/>
    <property type="chains" value="d=2-209"/>
</dbReference>
<dbReference type="PDB" id="5VP2">
    <property type="method" value="X-ray"/>
    <property type="resolution" value="2.80 A"/>
    <property type="chains" value="1d/2d=1-209"/>
</dbReference>
<dbReference type="PDB" id="5VPO">
    <property type="method" value="X-ray"/>
    <property type="resolution" value="3.34 A"/>
    <property type="chains" value="QD/XD=1-209"/>
</dbReference>
<dbReference type="PDB" id="5VPP">
    <property type="method" value="X-ray"/>
    <property type="resolution" value="3.90 A"/>
    <property type="chains" value="QD/XD=1-209"/>
</dbReference>
<dbReference type="PDB" id="5W4K">
    <property type="method" value="X-ray"/>
    <property type="resolution" value="2.70 A"/>
    <property type="chains" value="1d/2d=1-209"/>
</dbReference>
<dbReference type="PDB" id="5WIS">
    <property type="method" value="X-ray"/>
    <property type="resolution" value="2.70 A"/>
    <property type="chains" value="1d/2d=1-209"/>
</dbReference>
<dbReference type="PDB" id="5WIT">
    <property type="method" value="X-ray"/>
    <property type="resolution" value="2.60 A"/>
    <property type="chains" value="1d/2d=1-209"/>
</dbReference>
<dbReference type="PDB" id="5WNP">
    <property type="method" value="X-ray"/>
    <property type="resolution" value="3.30 A"/>
    <property type="chains" value="D=2-209"/>
</dbReference>
<dbReference type="PDB" id="5WNQ">
    <property type="method" value="X-ray"/>
    <property type="resolution" value="3.50 A"/>
    <property type="chains" value="D=2-209"/>
</dbReference>
<dbReference type="PDB" id="5WNR">
    <property type="method" value="X-ray"/>
    <property type="resolution" value="3.50 A"/>
    <property type="chains" value="D=2-209"/>
</dbReference>
<dbReference type="PDB" id="5WNS">
    <property type="method" value="X-ray"/>
    <property type="resolution" value="3.50 A"/>
    <property type="chains" value="D=2-209"/>
</dbReference>
<dbReference type="PDB" id="5WNT">
    <property type="method" value="X-ray"/>
    <property type="resolution" value="3.30 A"/>
    <property type="chains" value="D=2-209"/>
</dbReference>
<dbReference type="PDB" id="5WNU">
    <property type="method" value="X-ray"/>
    <property type="resolution" value="3.40 A"/>
    <property type="chains" value="D=2-209"/>
</dbReference>
<dbReference type="PDB" id="5WNV">
    <property type="method" value="X-ray"/>
    <property type="resolution" value="3.30 A"/>
    <property type="chains" value="D=2-209"/>
</dbReference>
<dbReference type="PDB" id="5ZLU">
    <property type="method" value="EM"/>
    <property type="resolution" value="3.60 A"/>
    <property type="chains" value="J=1-209"/>
</dbReference>
<dbReference type="PDB" id="6BUW">
    <property type="method" value="X-ray"/>
    <property type="resolution" value="3.50 A"/>
    <property type="chains" value="QD/XD=1-209"/>
</dbReference>
<dbReference type="PDB" id="6BZ6">
    <property type="method" value="X-ray"/>
    <property type="resolution" value="3.18 A"/>
    <property type="chains" value="QD/XD=1-209"/>
</dbReference>
<dbReference type="PDB" id="6BZ7">
    <property type="method" value="X-ray"/>
    <property type="resolution" value="3.68 A"/>
    <property type="chains" value="QD/XD=1-209"/>
</dbReference>
<dbReference type="PDB" id="6BZ8">
    <property type="method" value="X-ray"/>
    <property type="resolution" value="3.74 A"/>
    <property type="chains" value="QD/XD=1-209"/>
</dbReference>
<dbReference type="PDB" id="6C5L">
    <property type="method" value="X-ray"/>
    <property type="resolution" value="3.20 A"/>
    <property type="chains" value="AD/CD=1-209"/>
</dbReference>
<dbReference type="PDB" id="6CAE">
    <property type="method" value="X-ray"/>
    <property type="resolution" value="2.60 A"/>
    <property type="chains" value="1d/2d=1-209"/>
</dbReference>
<dbReference type="PDB" id="6CAO">
    <property type="method" value="X-ray"/>
    <property type="resolution" value="3.45 A"/>
    <property type="chains" value="D=2-209"/>
</dbReference>
<dbReference type="PDB" id="6CAP">
    <property type="method" value="X-ray"/>
    <property type="resolution" value="3.40 A"/>
    <property type="chains" value="D=2-209"/>
</dbReference>
<dbReference type="PDB" id="6CAQ">
    <property type="method" value="X-ray"/>
    <property type="resolution" value="3.40 A"/>
    <property type="chains" value="D=2-209"/>
</dbReference>
<dbReference type="PDB" id="6CAR">
    <property type="method" value="X-ray"/>
    <property type="resolution" value="3.40 A"/>
    <property type="chains" value="D=2-209"/>
</dbReference>
<dbReference type="PDB" id="6CAS">
    <property type="method" value="X-ray"/>
    <property type="resolution" value="3.50 A"/>
    <property type="chains" value="D=2-209"/>
</dbReference>
<dbReference type="PDB" id="6CFJ">
    <property type="method" value="X-ray"/>
    <property type="resolution" value="2.80 A"/>
    <property type="chains" value="1d/2d=1-209"/>
</dbReference>
<dbReference type="PDB" id="6CFK">
    <property type="method" value="X-ray"/>
    <property type="resolution" value="2.70 A"/>
    <property type="chains" value="1d/2d=1-209"/>
</dbReference>
<dbReference type="PDB" id="6CFL">
    <property type="method" value="X-ray"/>
    <property type="resolution" value="2.60 A"/>
    <property type="chains" value="1d/2d=1-209"/>
</dbReference>
<dbReference type="PDB" id="6CZR">
    <property type="method" value="X-ray"/>
    <property type="resolution" value="3.14 A"/>
    <property type="chains" value="1d/2d=2-209"/>
</dbReference>
<dbReference type="PDB" id="6DTI">
    <property type="method" value="X-ray"/>
    <property type="resolution" value="3.54 A"/>
    <property type="chains" value="D=1-209"/>
</dbReference>
<dbReference type="PDB" id="6FKR">
    <property type="method" value="X-ray"/>
    <property type="resolution" value="3.20 A"/>
    <property type="chains" value="1d/2d=2-209"/>
</dbReference>
<dbReference type="PDB" id="6GSJ">
    <property type="method" value="X-ray"/>
    <property type="resolution" value="2.96 A"/>
    <property type="chains" value="32/3E=1-209"/>
</dbReference>
<dbReference type="PDB" id="6GSK">
    <property type="method" value="X-ray"/>
    <property type="resolution" value="3.36 A"/>
    <property type="chains" value="32/3E=1-209"/>
</dbReference>
<dbReference type="PDB" id="6GSL">
    <property type="method" value="X-ray"/>
    <property type="resolution" value="3.16 A"/>
    <property type="chains" value="32/3E=1-209"/>
</dbReference>
<dbReference type="PDB" id="6GZQ">
    <property type="method" value="EM"/>
    <property type="resolution" value="3.28 A"/>
    <property type="chains" value="D2=2-209"/>
</dbReference>
<dbReference type="PDB" id="6GZX">
    <property type="method" value="EM"/>
    <property type="resolution" value="4.57 A"/>
    <property type="chains" value="D3/D4=2-209"/>
</dbReference>
<dbReference type="PDB" id="6GZZ">
    <property type="method" value="EM"/>
    <property type="resolution" value="4.13 A"/>
    <property type="chains" value="D3/D4=2-209"/>
</dbReference>
<dbReference type="PDB" id="6MKN">
    <property type="method" value="X-ray"/>
    <property type="resolution" value="3.46 A"/>
    <property type="chains" value="D=1-209"/>
</dbReference>
<dbReference type="PDB" id="6MPF">
    <property type="method" value="X-ray"/>
    <property type="resolution" value="3.33 A"/>
    <property type="chains" value="D=2-209"/>
</dbReference>
<dbReference type="PDB" id="6MPI">
    <property type="method" value="X-ray"/>
    <property type="resolution" value="3.33 A"/>
    <property type="chains" value="D=1-209"/>
</dbReference>
<dbReference type="PDB" id="6N9E">
    <property type="method" value="X-ray"/>
    <property type="resolution" value="3.70 A"/>
    <property type="chains" value="1d/2d=1-209"/>
</dbReference>
<dbReference type="PDB" id="6N9F">
    <property type="method" value="X-ray"/>
    <property type="resolution" value="3.70 A"/>
    <property type="chains" value="1d/2d=1-209"/>
</dbReference>
<dbReference type="PDB" id="6ND5">
    <property type="method" value="X-ray"/>
    <property type="resolution" value="2.60 A"/>
    <property type="chains" value="1d/2d=1-209"/>
</dbReference>
<dbReference type="PDB" id="6ND6">
    <property type="method" value="X-ray"/>
    <property type="resolution" value="2.85 A"/>
    <property type="chains" value="1d/2d=1-209"/>
</dbReference>
<dbReference type="PDB" id="6NDK">
    <property type="method" value="X-ray"/>
    <property type="resolution" value="3.64 A"/>
    <property type="chains" value="QD/XD=1-209"/>
</dbReference>
<dbReference type="PDB" id="6NSH">
    <property type="method" value="X-ray"/>
    <property type="resolution" value="3.40 A"/>
    <property type="chains" value="QD/XD=1-209"/>
</dbReference>
<dbReference type="PDB" id="6NTA">
    <property type="method" value="X-ray"/>
    <property type="resolution" value="3.10 A"/>
    <property type="chains" value="QD/XD=1-209"/>
</dbReference>
<dbReference type="PDB" id="6NUO">
    <property type="method" value="X-ray"/>
    <property type="resolution" value="3.20 A"/>
    <property type="chains" value="QD/XD=1-209"/>
</dbReference>
<dbReference type="PDB" id="6NWY">
    <property type="method" value="X-ray"/>
    <property type="resolution" value="3.50 A"/>
    <property type="chains" value="QD/XD=1-209"/>
</dbReference>
<dbReference type="PDB" id="6NY6">
    <property type="method" value="X-ray"/>
    <property type="resolution" value="3.74 A"/>
    <property type="chains" value="D=1-209"/>
</dbReference>
<dbReference type="PDB" id="6O3M">
    <property type="method" value="X-ray"/>
    <property type="resolution" value="3.97 A"/>
    <property type="chains" value="QD/XD=1-209"/>
</dbReference>
<dbReference type="PDB" id="6O97">
    <property type="method" value="X-ray"/>
    <property type="resolution" value="2.75 A"/>
    <property type="chains" value="1d/2d=1-209"/>
</dbReference>
<dbReference type="PDB" id="6OF1">
    <property type="method" value="X-ray"/>
    <property type="resolution" value="2.80 A"/>
    <property type="chains" value="1d/2d=1-209"/>
</dbReference>
<dbReference type="PDB" id="6OF6">
    <property type="method" value="X-ray"/>
    <property type="resolution" value="3.20 A"/>
    <property type="chains" value="QD/XD=1-209"/>
</dbReference>
<dbReference type="PDB" id="6OJ2">
    <property type="method" value="X-ray"/>
    <property type="resolution" value="3.20 A"/>
    <property type="chains" value="QD/XD=1-209"/>
</dbReference>
<dbReference type="PDB" id="6OPE">
    <property type="method" value="X-ray"/>
    <property type="resolution" value="3.10 A"/>
    <property type="chains" value="QD/XD=1-209"/>
</dbReference>
<dbReference type="PDB" id="6ORD">
    <property type="method" value="X-ray"/>
    <property type="resolution" value="3.10 A"/>
    <property type="chains" value="QD/XD=1-209"/>
</dbReference>
<dbReference type="PDB" id="6OSI">
    <property type="method" value="X-ray"/>
    <property type="resolution" value="4.14 A"/>
    <property type="chains" value="QD/XD=1-209"/>
</dbReference>
<dbReference type="PDB" id="6OTR">
    <property type="method" value="X-ray"/>
    <property type="resolution" value="3.12 A"/>
    <property type="chains" value="QD/XD=1-209"/>
</dbReference>
<dbReference type="PDB" id="6OXA">
    <property type="method" value="X-ray"/>
    <property type="resolution" value="3.25 A"/>
    <property type="chains" value="QD/XD=1-209"/>
</dbReference>
<dbReference type="PDB" id="6OXI">
    <property type="method" value="X-ray"/>
    <property type="resolution" value="3.50 A"/>
    <property type="chains" value="QD/XD=1-209"/>
</dbReference>
<dbReference type="PDB" id="6Q95">
    <property type="method" value="EM"/>
    <property type="resolution" value="3.70 A"/>
    <property type="chains" value="i=2-209"/>
</dbReference>
<dbReference type="PDB" id="6QNQ">
    <property type="method" value="X-ray"/>
    <property type="resolution" value="3.50 A"/>
    <property type="chains" value="32/3E=1-209"/>
</dbReference>
<dbReference type="PDB" id="6QNR">
    <property type="method" value="X-ray"/>
    <property type="resolution" value="3.10 A"/>
    <property type="chains" value="32/3E=1-209"/>
</dbReference>
<dbReference type="PDB" id="6UCQ">
    <property type="method" value="X-ray"/>
    <property type="resolution" value="3.50 A"/>
    <property type="chains" value="1d/2d=1-209"/>
</dbReference>
<dbReference type="PDB" id="6UO1">
    <property type="method" value="X-ray"/>
    <property type="resolution" value="2.95 A"/>
    <property type="chains" value="1d/2d=1-209"/>
</dbReference>
<dbReference type="PDB" id="6XHV">
    <property type="method" value="X-ray"/>
    <property type="resolution" value="2.40 A"/>
    <property type="chains" value="1d/2d=1-209"/>
</dbReference>
<dbReference type="PDB" id="6XHW">
    <property type="method" value="X-ray"/>
    <property type="resolution" value="2.50 A"/>
    <property type="chains" value="1d/2d=1-209"/>
</dbReference>
<dbReference type="PDB" id="6XHX">
    <property type="method" value="X-ray"/>
    <property type="resolution" value="2.55 A"/>
    <property type="chains" value="1d/2d=1-209"/>
</dbReference>
<dbReference type="PDB" id="6XHY">
    <property type="method" value="X-ray"/>
    <property type="resolution" value="2.60 A"/>
    <property type="chains" value="1d/2d=1-209"/>
</dbReference>
<dbReference type="PDB" id="6XQD">
    <property type="method" value="X-ray"/>
    <property type="resolution" value="2.80 A"/>
    <property type="chains" value="1d/2d=1-209"/>
</dbReference>
<dbReference type="PDB" id="6XQE">
    <property type="method" value="X-ray"/>
    <property type="resolution" value="3.00 A"/>
    <property type="chains" value="1d/2d=1-209"/>
</dbReference>
<dbReference type="PDB" id="7AZO">
    <property type="method" value="X-ray"/>
    <property type="resolution" value="3.30 A"/>
    <property type="chains" value="S4A/S4B=1-209"/>
</dbReference>
<dbReference type="PDB" id="7AZS">
    <property type="method" value="X-ray"/>
    <property type="resolution" value="3.10 A"/>
    <property type="chains" value="S4A/S4B=1-209"/>
</dbReference>
<dbReference type="PDB" id="7DUG">
    <property type="method" value="X-ray"/>
    <property type="resolution" value="3.75 A"/>
    <property type="chains" value="D=1-209"/>
</dbReference>
<dbReference type="PDB" id="7DUH">
    <property type="method" value="X-ray"/>
    <property type="resolution" value="3.75 A"/>
    <property type="chains" value="D=1-209"/>
</dbReference>
<dbReference type="PDB" id="7DUI">
    <property type="method" value="X-ray"/>
    <property type="resolution" value="3.62 A"/>
    <property type="chains" value="D=1-209"/>
</dbReference>
<dbReference type="PDB" id="7DUJ">
    <property type="method" value="X-ray"/>
    <property type="resolution" value="3.75 A"/>
    <property type="chains" value="D=1-209"/>
</dbReference>
<dbReference type="PDB" id="7DUK">
    <property type="method" value="X-ray"/>
    <property type="resolution" value="3.60 A"/>
    <property type="chains" value="D=1-209"/>
</dbReference>
<dbReference type="PDB" id="7DUL">
    <property type="method" value="X-ray"/>
    <property type="resolution" value="3.62 A"/>
    <property type="chains" value="D=1-209"/>
</dbReference>
<dbReference type="PDB" id="7JQL">
    <property type="method" value="X-ray"/>
    <property type="resolution" value="3.00 A"/>
    <property type="chains" value="1d/2d=1-209"/>
</dbReference>
<dbReference type="PDB" id="7JQM">
    <property type="method" value="X-ray"/>
    <property type="resolution" value="3.05 A"/>
    <property type="chains" value="1d/2d=1-209"/>
</dbReference>
<dbReference type="PDB" id="7LH5">
    <property type="method" value="X-ray"/>
    <property type="resolution" value="3.27 A"/>
    <property type="chains" value="AD/CD=1-209"/>
</dbReference>
<dbReference type="PDB" id="7MD7">
    <property type="method" value="X-ray"/>
    <property type="resolution" value="2.80 A"/>
    <property type="chains" value="1d/2d=1-209"/>
</dbReference>
<dbReference type="PDB" id="7RQ8">
    <property type="method" value="X-ray"/>
    <property type="resolution" value="2.50 A"/>
    <property type="chains" value="1d/2d=1-209"/>
</dbReference>
<dbReference type="PDB" id="7RQ9">
    <property type="method" value="X-ray"/>
    <property type="resolution" value="2.60 A"/>
    <property type="chains" value="1d/2d=1-209"/>
</dbReference>
<dbReference type="PDB" id="7RQA">
    <property type="method" value="X-ray"/>
    <property type="resolution" value="2.40 A"/>
    <property type="chains" value="1d/2d=1-209"/>
</dbReference>
<dbReference type="PDB" id="7RQB">
    <property type="method" value="X-ray"/>
    <property type="resolution" value="2.45 A"/>
    <property type="chains" value="1d/2d=1-209"/>
</dbReference>
<dbReference type="PDB" id="7RQC">
    <property type="method" value="X-ray"/>
    <property type="resolution" value="2.50 A"/>
    <property type="chains" value="1d/2d=1-209"/>
</dbReference>
<dbReference type="PDB" id="7RQD">
    <property type="method" value="X-ray"/>
    <property type="resolution" value="2.50 A"/>
    <property type="chains" value="1d/2d=1-209"/>
</dbReference>
<dbReference type="PDB" id="7RQE">
    <property type="method" value="X-ray"/>
    <property type="resolution" value="2.40 A"/>
    <property type="chains" value="1d/2d=1-209"/>
</dbReference>
<dbReference type="PDB" id="7U2H">
    <property type="method" value="X-ray"/>
    <property type="resolution" value="2.55 A"/>
    <property type="chains" value="1d/2d=1-209"/>
</dbReference>
<dbReference type="PDB" id="7U2I">
    <property type="method" value="X-ray"/>
    <property type="resolution" value="2.55 A"/>
    <property type="chains" value="1d/2d=1-209"/>
</dbReference>
<dbReference type="PDB" id="7U2J">
    <property type="method" value="X-ray"/>
    <property type="resolution" value="2.55 A"/>
    <property type="chains" value="1d/2d=1-209"/>
</dbReference>
<dbReference type="PDB" id="7V2L">
    <property type="method" value="EM"/>
    <property type="resolution" value="3.30 A"/>
    <property type="chains" value="D=1-209"/>
</dbReference>
<dbReference type="PDB" id="7V2M">
    <property type="method" value="EM"/>
    <property type="resolution" value="3.40 A"/>
    <property type="chains" value="D=1-209"/>
</dbReference>
<dbReference type="PDB" id="7V2N">
    <property type="method" value="EM"/>
    <property type="resolution" value="3.60 A"/>
    <property type="chains" value="D=1-209"/>
</dbReference>
<dbReference type="PDB" id="7V2O">
    <property type="method" value="EM"/>
    <property type="resolution" value="3.50 A"/>
    <property type="chains" value="D=1-209"/>
</dbReference>
<dbReference type="PDB" id="7V2P">
    <property type="method" value="EM"/>
    <property type="resolution" value="3.30 A"/>
    <property type="chains" value="D=1-209"/>
</dbReference>
<dbReference type="PDB" id="7V2Q">
    <property type="method" value="EM"/>
    <property type="resolution" value="3.24 A"/>
    <property type="chains" value="D=1-209"/>
</dbReference>
<dbReference type="PDB" id="8CVJ">
    <property type="method" value="X-ray"/>
    <property type="resolution" value="2.40 A"/>
    <property type="chains" value="1d/2d=1-209"/>
</dbReference>
<dbReference type="PDB" id="8CVK">
    <property type="method" value="X-ray"/>
    <property type="resolution" value="2.50 A"/>
    <property type="chains" value="1d/2d=1-209"/>
</dbReference>
<dbReference type="PDB" id="8CVL">
    <property type="method" value="X-ray"/>
    <property type="resolution" value="2.30 A"/>
    <property type="chains" value="1d/2d=1-209"/>
</dbReference>
<dbReference type="PDB" id="8EKB">
    <property type="method" value="X-ray"/>
    <property type="resolution" value="2.70 A"/>
    <property type="chains" value="1d/2d=1-209"/>
</dbReference>
<dbReference type="PDB" id="8EV6">
    <property type="method" value="X-ray"/>
    <property type="resolution" value="2.95 A"/>
    <property type="chains" value="1d/2d=1-209"/>
</dbReference>
<dbReference type="PDB" id="8EV7">
    <property type="method" value="X-ray"/>
    <property type="resolution" value="2.89 A"/>
    <property type="chains" value="1d/2d=1-209"/>
</dbReference>
<dbReference type="PDB" id="8FC1">
    <property type="method" value="X-ray"/>
    <property type="resolution" value="2.50 A"/>
    <property type="chains" value="1d/2d=1-209"/>
</dbReference>
<dbReference type="PDB" id="8FC2">
    <property type="method" value="X-ray"/>
    <property type="resolution" value="2.50 A"/>
    <property type="chains" value="1d/2d=1-209"/>
</dbReference>
<dbReference type="PDB" id="8FC3">
    <property type="method" value="X-ray"/>
    <property type="resolution" value="2.60 A"/>
    <property type="chains" value="1d/2d=1-209"/>
</dbReference>
<dbReference type="PDB" id="8FC4">
    <property type="method" value="X-ray"/>
    <property type="resolution" value="2.45 A"/>
    <property type="chains" value="1d/2d=1-209"/>
</dbReference>
<dbReference type="PDB" id="8FC5">
    <property type="method" value="X-ray"/>
    <property type="resolution" value="2.65 A"/>
    <property type="chains" value="1d/2d=1-209"/>
</dbReference>
<dbReference type="PDB" id="8FC6">
    <property type="method" value="X-ray"/>
    <property type="resolution" value="2.35 A"/>
    <property type="chains" value="1d/2d=1-209"/>
</dbReference>
<dbReference type="PDB" id="8FOM">
    <property type="method" value="X-ray"/>
    <property type="resolution" value="3.58 A"/>
    <property type="chains" value="QD/XD=1-209"/>
</dbReference>
<dbReference type="PDB" id="8FON">
    <property type="method" value="X-ray"/>
    <property type="resolution" value="3.64 A"/>
    <property type="chains" value="QD/XD=1-209"/>
</dbReference>
<dbReference type="PDB" id="8G29">
    <property type="method" value="X-ray"/>
    <property type="resolution" value="2.55 A"/>
    <property type="chains" value="1d/2d=1-209"/>
</dbReference>
<dbReference type="PDB" id="8G2A">
    <property type="method" value="X-ray"/>
    <property type="resolution" value="2.45 A"/>
    <property type="chains" value="1d/2d=1-209"/>
</dbReference>
<dbReference type="PDB" id="8G2B">
    <property type="method" value="X-ray"/>
    <property type="resolution" value="2.55 A"/>
    <property type="chains" value="1d/2d=1-209"/>
</dbReference>
<dbReference type="PDB" id="8G2C">
    <property type="method" value="X-ray"/>
    <property type="resolution" value="2.65 A"/>
    <property type="chains" value="1d/2d=1-209"/>
</dbReference>
<dbReference type="PDB" id="8G2D">
    <property type="method" value="X-ray"/>
    <property type="resolution" value="2.70 A"/>
    <property type="chains" value="1d/2d=1-209"/>
</dbReference>
<dbReference type="PDB" id="8T8B">
    <property type="method" value="X-ray"/>
    <property type="resolution" value="2.65 A"/>
    <property type="chains" value="1d/2d=1-209"/>
</dbReference>
<dbReference type="PDB" id="8T8C">
    <property type="method" value="X-ray"/>
    <property type="resolution" value="2.60 A"/>
    <property type="chains" value="1d/2d=1-209"/>
</dbReference>
<dbReference type="PDB" id="8UD6">
    <property type="method" value="X-ray"/>
    <property type="resolution" value="2.70 A"/>
    <property type="chains" value="1d/2d=1-209"/>
</dbReference>
<dbReference type="PDB" id="8UD7">
    <property type="method" value="X-ray"/>
    <property type="resolution" value="2.55 A"/>
    <property type="chains" value="1d/2d=1-209"/>
</dbReference>
<dbReference type="PDB" id="8UD8">
    <property type="method" value="X-ray"/>
    <property type="resolution" value="2.60 A"/>
    <property type="chains" value="1d/2d=1-209"/>
</dbReference>
<dbReference type="PDB" id="8UVR">
    <property type="method" value="X-ray"/>
    <property type="resolution" value="2.60 A"/>
    <property type="chains" value="1d/2d=1-209"/>
</dbReference>
<dbReference type="PDB" id="8UVS">
    <property type="method" value="X-ray"/>
    <property type="resolution" value="2.75 A"/>
    <property type="chains" value="1d/2d=1-209"/>
</dbReference>
<dbReference type="PDB" id="8VTU">
    <property type="method" value="X-ray"/>
    <property type="resolution" value="2.40 A"/>
    <property type="chains" value="1d/2d=1-209"/>
</dbReference>
<dbReference type="PDB" id="8VTV">
    <property type="method" value="X-ray"/>
    <property type="resolution" value="2.55 A"/>
    <property type="chains" value="1d/2d=1-209"/>
</dbReference>
<dbReference type="PDB" id="8VTW">
    <property type="method" value="X-ray"/>
    <property type="resolution" value="2.35 A"/>
    <property type="chains" value="1d/2d=1-209"/>
</dbReference>
<dbReference type="PDB" id="8VTX">
    <property type="method" value="X-ray"/>
    <property type="resolution" value="2.40 A"/>
    <property type="chains" value="1d/2d=1-209"/>
</dbReference>
<dbReference type="PDB" id="8VTY">
    <property type="method" value="X-ray"/>
    <property type="resolution" value="2.60 A"/>
    <property type="chains" value="1d/2d=1-209"/>
</dbReference>
<dbReference type="PDB" id="9B00">
    <property type="method" value="X-ray"/>
    <property type="resolution" value="2.80 A"/>
    <property type="chains" value="1d/2d=1-209"/>
</dbReference>
<dbReference type="PDB" id="9D0J">
    <property type="method" value="X-ray"/>
    <property type="resolution" value="2.50 A"/>
    <property type="chains" value="1d/2d=1-209"/>
</dbReference>
<dbReference type="PDB" id="9D7R">
    <property type="method" value="X-ray"/>
    <property type="resolution" value="2.70 A"/>
    <property type="chains" value="1d/2d=1-209"/>
</dbReference>
<dbReference type="PDB" id="9D7S">
    <property type="method" value="X-ray"/>
    <property type="resolution" value="2.85 A"/>
    <property type="chains" value="1d/2d=1-209"/>
</dbReference>
<dbReference type="PDB" id="9D7T">
    <property type="method" value="X-ray"/>
    <property type="resolution" value="2.70 A"/>
    <property type="chains" value="1d/2d=1-209"/>
</dbReference>
<dbReference type="PDB" id="9DFC">
    <property type="method" value="X-ray"/>
    <property type="resolution" value="2.50 A"/>
    <property type="chains" value="1d/2d=1-209"/>
</dbReference>
<dbReference type="PDB" id="9DFD">
    <property type="method" value="X-ray"/>
    <property type="resolution" value="2.60 A"/>
    <property type="chains" value="1d/2d=1-209"/>
</dbReference>
<dbReference type="PDB" id="9DFE">
    <property type="method" value="X-ray"/>
    <property type="resolution" value="2.60 A"/>
    <property type="chains" value="1d/2d=1-209"/>
</dbReference>
<dbReference type="PDBsum" id="1FJG"/>
<dbReference type="PDBsum" id="1FKA"/>
<dbReference type="PDBsum" id="1HNW"/>
<dbReference type="PDBsum" id="1HNX"/>
<dbReference type="PDBsum" id="1HNZ"/>
<dbReference type="PDBsum" id="1HR0"/>
<dbReference type="PDBsum" id="1I94"/>
<dbReference type="PDBsum" id="1I95"/>
<dbReference type="PDBsum" id="1I96"/>
<dbReference type="PDBsum" id="1I97"/>
<dbReference type="PDBsum" id="1IBK"/>
<dbReference type="PDBsum" id="1IBL"/>
<dbReference type="PDBsum" id="1IBM"/>
<dbReference type="PDBsum" id="1J5E"/>
<dbReference type="PDBsum" id="1JGO"/>
<dbReference type="PDBsum" id="1JGP"/>
<dbReference type="PDBsum" id="1JGQ"/>
<dbReference type="PDBsum" id="1ML5"/>
<dbReference type="PDBsum" id="1N32"/>
<dbReference type="PDBsum" id="1N33"/>
<dbReference type="PDBsum" id="1N34"/>
<dbReference type="PDBsum" id="1N36"/>
<dbReference type="PDBsum" id="1QD7"/>
<dbReference type="PDBsum" id="1VVJ"/>
<dbReference type="PDBsum" id="1VY4"/>
<dbReference type="PDBsum" id="1VY5"/>
<dbReference type="PDBsum" id="1VY6"/>
<dbReference type="PDBsum" id="1VY7"/>
<dbReference type="PDBsum" id="1XMO"/>
<dbReference type="PDBsum" id="1XMQ"/>
<dbReference type="PDBsum" id="1XNQ"/>
<dbReference type="PDBsum" id="1XNR"/>
<dbReference type="PDBsum" id="2E5L"/>
<dbReference type="PDBsum" id="2F4V"/>
<dbReference type="PDBsum" id="2HHH"/>
<dbReference type="PDBsum" id="2UU9"/>
<dbReference type="PDBsum" id="2UUA"/>
<dbReference type="PDBsum" id="2UUB"/>
<dbReference type="PDBsum" id="2UUC"/>
<dbReference type="PDBsum" id="2UXB"/>
<dbReference type="PDBsum" id="2UXC"/>
<dbReference type="PDBsum" id="2UXD"/>
<dbReference type="PDBsum" id="2VQE"/>
<dbReference type="PDBsum" id="2VQF"/>
<dbReference type="PDBsum" id="2ZM6"/>
<dbReference type="PDBsum" id="3OTO"/>
<dbReference type="PDBsum" id="3T1H"/>
<dbReference type="PDBsum" id="3T1Y"/>
<dbReference type="PDBsum" id="4AQY"/>
<dbReference type="PDBsum" id="4B3M"/>
<dbReference type="PDBsum" id="4B3R"/>
<dbReference type="PDBsum" id="4B3S"/>
<dbReference type="PDBsum" id="4B3T"/>
<dbReference type="PDBsum" id="4DR1"/>
<dbReference type="PDBsum" id="4DR2"/>
<dbReference type="PDBsum" id="4DR3"/>
<dbReference type="PDBsum" id="4DR4"/>
<dbReference type="PDBsum" id="4DR5"/>
<dbReference type="PDBsum" id="4DR6"/>
<dbReference type="PDBsum" id="4DR7"/>
<dbReference type="PDBsum" id="4DUY"/>
<dbReference type="PDBsum" id="4DUZ"/>
<dbReference type="PDBsum" id="4DV0"/>
<dbReference type="PDBsum" id="4DV1"/>
<dbReference type="PDBsum" id="4DV2"/>
<dbReference type="PDBsum" id="4DV3"/>
<dbReference type="PDBsum" id="4DV4"/>
<dbReference type="PDBsum" id="4DV5"/>
<dbReference type="PDBsum" id="4DV6"/>
<dbReference type="PDBsum" id="4DV7"/>
<dbReference type="PDBsum" id="4GKJ"/>
<dbReference type="PDBsum" id="4GKK"/>
<dbReference type="PDBsum" id="4JI0"/>
<dbReference type="PDBsum" id="4JI1"/>
<dbReference type="PDBsum" id="4JI2"/>
<dbReference type="PDBsum" id="4JI3"/>
<dbReference type="PDBsum" id="4JI4"/>
<dbReference type="PDBsum" id="4JI5"/>
<dbReference type="PDBsum" id="4JI6"/>
<dbReference type="PDBsum" id="4JI7"/>
<dbReference type="PDBsum" id="4JI8"/>
<dbReference type="PDBsum" id="4JV5"/>
<dbReference type="PDBsum" id="4JYA"/>
<dbReference type="PDBsum" id="4K0K"/>
<dbReference type="PDBsum" id="4KHP"/>
<dbReference type="PDBsum" id="4L47"/>
<dbReference type="PDBsum" id="4L71"/>
<dbReference type="PDBsum" id="4LEL"/>
<dbReference type="PDBsum" id="4LF4"/>
<dbReference type="PDBsum" id="4LF5"/>
<dbReference type="PDBsum" id="4LF6"/>
<dbReference type="PDBsum" id="4LF7"/>
<dbReference type="PDBsum" id="4LF8"/>
<dbReference type="PDBsum" id="4LF9"/>
<dbReference type="PDBsum" id="4LFA"/>
<dbReference type="PDBsum" id="4LFB"/>
<dbReference type="PDBsum" id="4LFC"/>
<dbReference type="PDBsum" id="4LFZ"/>
<dbReference type="PDBsum" id="4LNT"/>
<dbReference type="PDBsum" id="4LSK"/>
<dbReference type="PDBsum" id="4LT8"/>
<dbReference type="PDBsum" id="4NXM"/>
<dbReference type="PDBsum" id="4NXN"/>
<dbReference type="PDBsum" id="4OX9"/>
<dbReference type="PDBsum" id="4P6F"/>
<dbReference type="PDBsum" id="4P70"/>
<dbReference type="PDBsum" id="4TUA"/>
<dbReference type="PDBsum" id="4TUB"/>
<dbReference type="PDBsum" id="4TUC"/>
<dbReference type="PDBsum" id="4TUD"/>
<dbReference type="PDBsum" id="4TUE"/>
<dbReference type="PDBsum" id="4V42"/>
<dbReference type="PDBsum" id="4V49"/>
<dbReference type="PDBsum" id="4V4A"/>
<dbReference type="PDBsum" id="4V4I"/>
<dbReference type="PDBsum" id="4V4P"/>
<dbReference type="PDBsum" id="4V4R"/>
<dbReference type="PDBsum" id="4V4S"/>
<dbReference type="PDBsum" id="4V4T"/>
<dbReference type="PDBsum" id="4V4X"/>
<dbReference type="PDBsum" id="4V4Y"/>
<dbReference type="PDBsum" id="4V4Z"/>
<dbReference type="PDBsum" id="4V51"/>
<dbReference type="PDBsum" id="4V5A"/>
<dbReference type="PDBsum" id="4V5C"/>
<dbReference type="PDBsum" id="4V5D"/>
<dbReference type="PDBsum" id="4V5E"/>
<dbReference type="PDBsum" id="4V5F"/>
<dbReference type="PDBsum" id="4V5G"/>
<dbReference type="PDBsum" id="4V5J"/>
<dbReference type="PDBsum" id="4V5K"/>
<dbReference type="PDBsum" id="4V5L"/>
<dbReference type="PDBsum" id="4V5M"/>
<dbReference type="PDBsum" id="4V5N"/>
<dbReference type="PDBsum" id="4V5P"/>
<dbReference type="PDBsum" id="4V5Q"/>
<dbReference type="PDBsum" id="4V5R"/>
<dbReference type="PDBsum" id="4V5S"/>
<dbReference type="PDBsum" id="4V68"/>
<dbReference type="PDBsum" id="4V6A"/>
<dbReference type="PDBsum" id="4V6F"/>
<dbReference type="PDBsum" id="4V6G"/>
<dbReference type="PDBsum" id="4V7J"/>
<dbReference type="PDBsum" id="4V7K"/>
<dbReference type="PDBsum" id="4V7L"/>
<dbReference type="PDBsum" id="4V7M"/>
<dbReference type="PDBsum" id="4V7W"/>
<dbReference type="PDBsum" id="4V7X"/>
<dbReference type="PDBsum" id="4V7Y"/>
<dbReference type="PDBsum" id="4V7Z"/>
<dbReference type="PDBsum" id="4V87"/>
<dbReference type="PDBsum" id="4V8A"/>
<dbReference type="PDBsum" id="4V8B"/>
<dbReference type="PDBsum" id="4V8C"/>
<dbReference type="PDBsum" id="4V8D"/>
<dbReference type="PDBsum" id="4V8E"/>
<dbReference type="PDBsum" id="4V8F"/>
<dbReference type="PDBsum" id="4V8G"/>
<dbReference type="PDBsum" id="4V8H"/>
<dbReference type="PDBsum" id="4V8I"/>
<dbReference type="PDBsum" id="4V8J"/>
<dbReference type="PDBsum" id="4V8N"/>
<dbReference type="PDBsum" id="4V8O"/>
<dbReference type="PDBsum" id="4V8Q"/>
<dbReference type="PDBsum" id="4V8U"/>
<dbReference type="PDBsum" id="4V8X"/>
<dbReference type="PDBsum" id="4V90"/>
<dbReference type="PDBsum" id="4V95"/>
<dbReference type="PDBsum" id="4V97"/>
<dbReference type="PDBsum" id="4V9A"/>
<dbReference type="PDBsum" id="4V9B"/>
<dbReference type="PDBsum" id="4V9H"/>
<dbReference type="PDBsum" id="4V9I"/>
<dbReference type="PDBsum" id="4V9R"/>
<dbReference type="PDBsum" id="4V9S"/>
<dbReference type="PDBsum" id="4W2E"/>
<dbReference type="PDBsum" id="4W2F"/>
<dbReference type="PDBsum" id="4W2G"/>
<dbReference type="PDBsum" id="4W2H"/>
<dbReference type="PDBsum" id="4W2I"/>
<dbReference type="PDBsum" id="4W4G"/>
<dbReference type="PDBsum" id="4WPO"/>
<dbReference type="PDBsum" id="4WQ1"/>
<dbReference type="PDBsum" id="4WQF"/>
<dbReference type="PDBsum" id="4WQR"/>
<dbReference type="PDBsum" id="4WQU"/>
<dbReference type="PDBsum" id="4WQY"/>
<dbReference type="PDBsum" id="4WR6"/>
<dbReference type="PDBsum" id="4WRA"/>
<dbReference type="PDBsum" id="4WRO"/>
<dbReference type="PDBsum" id="4WSD"/>
<dbReference type="PDBsum" id="4WSM"/>
<dbReference type="PDBsum" id="4WT1"/>
<dbReference type="PDBsum" id="4WT8"/>
<dbReference type="PDBsum" id="4WU1"/>
<dbReference type="PDBsum" id="4WZD"/>
<dbReference type="PDBsum" id="4WZO"/>
<dbReference type="PDBsum" id="4X62"/>
<dbReference type="PDBsum" id="4X64"/>
<dbReference type="PDBsum" id="4X65"/>
<dbReference type="PDBsum" id="4X66"/>
<dbReference type="PDBsum" id="4Y4O"/>
<dbReference type="PDBsum" id="4Y4P"/>
<dbReference type="PDBsum" id="4YHH"/>
<dbReference type="PDBsum" id="4YPB"/>
<dbReference type="PDBsum" id="4YY3"/>
<dbReference type="PDBsum" id="4YZV"/>
<dbReference type="PDBsum" id="4Z3S"/>
<dbReference type="PDBsum" id="4Z8C"/>
<dbReference type="PDBsum" id="4ZER"/>
<dbReference type="PDBsum" id="4ZSN"/>
<dbReference type="PDBsum" id="5A9Z"/>
<dbReference type="PDBsum" id="5AA0"/>
<dbReference type="PDBsum" id="5BR8"/>
<dbReference type="PDBsum" id="5CZP"/>
<dbReference type="PDBsum" id="5D8B"/>
<dbReference type="PDBsum" id="5DFE"/>
<dbReference type="PDBsum" id="5DOX"/>
<dbReference type="PDBsum" id="5DOY"/>
<dbReference type="PDBsum" id="5E7K"/>
<dbReference type="PDBsum" id="5E81"/>
<dbReference type="PDBsum" id="5EL4"/>
<dbReference type="PDBsum" id="5EL5"/>
<dbReference type="PDBsum" id="5EL6"/>
<dbReference type="PDBsum" id="5EL7"/>
<dbReference type="PDBsum" id="5F8K"/>
<dbReference type="PDBsum" id="5FDU"/>
<dbReference type="PDBsum" id="5FDV"/>
<dbReference type="PDBsum" id="5HAU"/>
<dbReference type="PDBsum" id="5HCP"/>
<dbReference type="PDBsum" id="5HCQ"/>
<dbReference type="PDBsum" id="5HCR"/>
<dbReference type="PDBsum" id="5HD1"/>
<dbReference type="PDBsum" id="5IB7"/>
<dbReference type="PDBsum" id="5IB8"/>
<dbReference type="PDBsum" id="5IBB"/>
<dbReference type="PDBsum" id="5IMQ"/>
<dbReference type="PDBsum" id="5IMR"/>
<dbReference type="PDBsum" id="5IWA"/>
<dbReference type="PDBsum" id="5J30"/>
<dbReference type="PDBsum" id="5J3C"/>
<dbReference type="PDBsum" id="5J4B"/>
<dbReference type="PDBsum" id="5J4C"/>
<dbReference type="PDBsum" id="5J8B"/>
<dbReference type="PDBsum" id="5LMN"/>
<dbReference type="PDBsum" id="5LMO"/>
<dbReference type="PDBsum" id="5LMP"/>
<dbReference type="PDBsum" id="5LMQ"/>
<dbReference type="PDBsum" id="5LMR"/>
<dbReference type="PDBsum" id="5LMS"/>
<dbReference type="PDBsum" id="5LMT"/>
<dbReference type="PDBsum" id="5LMU"/>
<dbReference type="PDBsum" id="5LMV"/>
<dbReference type="PDBsum" id="5NDJ"/>
<dbReference type="PDBsum" id="5NDK"/>
<dbReference type="PDBsum" id="5OT7"/>
<dbReference type="PDBsum" id="5UQ7"/>
<dbReference type="PDBsum" id="5UQ8"/>
<dbReference type="PDBsum" id="5VP2"/>
<dbReference type="PDBsum" id="5VPO"/>
<dbReference type="PDBsum" id="5VPP"/>
<dbReference type="PDBsum" id="5W4K"/>
<dbReference type="PDBsum" id="5WIS"/>
<dbReference type="PDBsum" id="5WIT"/>
<dbReference type="PDBsum" id="5WNP"/>
<dbReference type="PDBsum" id="5WNQ"/>
<dbReference type="PDBsum" id="5WNR"/>
<dbReference type="PDBsum" id="5WNS"/>
<dbReference type="PDBsum" id="5WNT"/>
<dbReference type="PDBsum" id="5WNU"/>
<dbReference type="PDBsum" id="5WNV"/>
<dbReference type="PDBsum" id="5ZLU"/>
<dbReference type="PDBsum" id="6BUW"/>
<dbReference type="PDBsum" id="6BZ6"/>
<dbReference type="PDBsum" id="6BZ7"/>
<dbReference type="PDBsum" id="6BZ8"/>
<dbReference type="PDBsum" id="6C5L"/>
<dbReference type="PDBsum" id="6CAE"/>
<dbReference type="PDBsum" id="6CAO"/>
<dbReference type="PDBsum" id="6CAP"/>
<dbReference type="PDBsum" id="6CAQ"/>
<dbReference type="PDBsum" id="6CAR"/>
<dbReference type="PDBsum" id="6CAS"/>
<dbReference type="PDBsum" id="6CFJ"/>
<dbReference type="PDBsum" id="6CFK"/>
<dbReference type="PDBsum" id="6CFL"/>
<dbReference type="PDBsum" id="6CZR"/>
<dbReference type="PDBsum" id="6DTI"/>
<dbReference type="PDBsum" id="6FKR"/>
<dbReference type="PDBsum" id="6GSJ"/>
<dbReference type="PDBsum" id="6GSK"/>
<dbReference type="PDBsum" id="6GSL"/>
<dbReference type="PDBsum" id="6GZQ"/>
<dbReference type="PDBsum" id="6GZX"/>
<dbReference type="PDBsum" id="6GZZ"/>
<dbReference type="PDBsum" id="6MKN"/>
<dbReference type="PDBsum" id="6MPF"/>
<dbReference type="PDBsum" id="6MPI"/>
<dbReference type="PDBsum" id="6N9E"/>
<dbReference type="PDBsum" id="6N9F"/>
<dbReference type="PDBsum" id="6ND5"/>
<dbReference type="PDBsum" id="6ND6"/>
<dbReference type="PDBsum" id="6NDK"/>
<dbReference type="PDBsum" id="6NSH"/>
<dbReference type="PDBsum" id="6NTA"/>
<dbReference type="PDBsum" id="6NUO"/>
<dbReference type="PDBsum" id="6NWY"/>
<dbReference type="PDBsum" id="6NY6"/>
<dbReference type="PDBsum" id="6O3M"/>
<dbReference type="PDBsum" id="6O97"/>
<dbReference type="PDBsum" id="6OF1"/>
<dbReference type="PDBsum" id="6OF6"/>
<dbReference type="PDBsum" id="6OJ2"/>
<dbReference type="PDBsum" id="6OPE"/>
<dbReference type="PDBsum" id="6ORD"/>
<dbReference type="PDBsum" id="6OSI"/>
<dbReference type="PDBsum" id="6OTR"/>
<dbReference type="PDBsum" id="6OXA"/>
<dbReference type="PDBsum" id="6OXI"/>
<dbReference type="PDBsum" id="6Q95"/>
<dbReference type="PDBsum" id="6QNQ"/>
<dbReference type="PDBsum" id="6QNR"/>
<dbReference type="PDBsum" id="6UCQ"/>
<dbReference type="PDBsum" id="6UO1"/>
<dbReference type="PDBsum" id="6XHV"/>
<dbReference type="PDBsum" id="6XHW"/>
<dbReference type="PDBsum" id="6XHX"/>
<dbReference type="PDBsum" id="6XHY"/>
<dbReference type="PDBsum" id="6XQD"/>
<dbReference type="PDBsum" id="6XQE"/>
<dbReference type="PDBsum" id="7AZO"/>
<dbReference type="PDBsum" id="7AZS"/>
<dbReference type="PDBsum" id="7DUG"/>
<dbReference type="PDBsum" id="7DUH"/>
<dbReference type="PDBsum" id="7DUI"/>
<dbReference type="PDBsum" id="7DUJ"/>
<dbReference type="PDBsum" id="7DUK"/>
<dbReference type="PDBsum" id="7DUL"/>
<dbReference type="PDBsum" id="7JQL"/>
<dbReference type="PDBsum" id="7JQM"/>
<dbReference type="PDBsum" id="7LH5"/>
<dbReference type="PDBsum" id="7MD7"/>
<dbReference type="PDBsum" id="7RQ8"/>
<dbReference type="PDBsum" id="7RQ9"/>
<dbReference type="PDBsum" id="7RQA"/>
<dbReference type="PDBsum" id="7RQB"/>
<dbReference type="PDBsum" id="7RQC"/>
<dbReference type="PDBsum" id="7RQD"/>
<dbReference type="PDBsum" id="7RQE"/>
<dbReference type="PDBsum" id="7U2H"/>
<dbReference type="PDBsum" id="7U2I"/>
<dbReference type="PDBsum" id="7U2J"/>
<dbReference type="PDBsum" id="7V2L"/>
<dbReference type="PDBsum" id="7V2M"/>
<dbReference type="PDBsum" id="7V2N"/>
<dbReference type="PDBsum" id="7V2O"/>
<dbReference type="PDBsum" id="7V2P"/>
<dbReference type="PDBsum" id="7V2Q"/>
<dbReference type="PDBsum" id="8CVJ"/>
<dbReference type="PDBsum" id="8CVK"/>
<dbReference type="PDBsum" id="8CVL"/>
<dbReference type="PDBsum" id="8EKB"/>
<dbReference type="PDBsum" id="8EV6"/>
<dbReference type="PDBsum" id="8EV7"/>
<dbReference type="PDBsum" id="8FC1"/>
<dbReference type="PDBsum" id="8FC2"/>
<dbReference type="PDBsum" id="8FC3"/>
<dbReference type="PDBsum" id="8FC4"/>
<dbReference type="PDBsum" id="8FC5"/>
<dbReference type="PDBsum" id="8FC6"/>
<dbReference type="PDBsum" id="8FOM"/>
<dbReference type="PDBsum" id="8FON"/>
<dbReference type="PDBsum" id="8G29"/>
<dbReference type="PDBsum" id="8G2A"/>
<dbReference type="PDBsum" id="8G2B"/>
<dbReference type="PDBsum" id="8G2C"/>
<dbReference type="PDBsum" id="8G2D"/>
<dbReference type="PDBsum" id="8T8B"/>
<dbReference type="PDBsum" id="8T8C"/>
<dbReference type="PDBsum" id="8UD6"/>
<dbReference type="PDBsum" id="8UD7"/>
<dbReference type="PDBsum" id="8UD8"/>
<dbReference type="PDBsum" id="8UVR"/>
<dbReference type="PDBsum" id="8UVS"/>
<dbReference type="PDBsum" id="8VTU"/>
<dbReference type="PDBsum" id="8VTV"/>
<dbReference type="PDBsum" id="8VTW"/>
<dbReference type="PDBsum" id="8VTX"/>
<dbReference type="PDBsum" id="8VTY"/>
<dbReference type="PDBsum" id="9B00"/>
<dbReference type="PDBsum" id="9D0J"/>
<dbReference type="PDBsum" id="9D7R"/>
<dbReference type="PDBsum" id="9D7S"/>
<dbReference type="PDBsum" id="9D7T"/>
<dbReference type="PDBsum" id="9DFC"/>
<dbReference type="PDBsum" id="9DFD"/>
<dbReference type="PDBsum" id="9DFE"/>
<dbReference type="EMDB" id="EMD-0101"/>
<dbReference type="EMDB" id="EMD-0104"/>
<dbReference type="EMDB" id="EMD-0105"/>
<dbReference type="EMDB" id="EMD-31655"/>
<dbReference type="EMDB" id="EMD-31656"/>
<dbReference type="EMDB" id="EMD-31657"/>
<dbReference type="EMDB" id="EMD-31658"/>
<dbReference type="EMDB" id="EMD-31659"/>
<dbReference type="EMDB" id="EMD-31660"/>
<dbReference type="EMDB" id="EMD-3852"/>
<dbReference type="EMDB" id="EMD-4073"/>
<dbReference type="EMDB" id="EMD-4074"/>
<dbReference type="EMDB" id="EMD-4075"/>
<dbReference type="EMDB" id="EMD-4076"/>
<dbReference type="EMDB" id="EMD-4077"/>
<dbReference type="EMDB" id="EMD-4078"/>
<dbReference type="EMDB" id="EMD-4079"/>
<dbReference type="EMDB" id="EMD-4080"/>
<dbReference type="EMDB" id="EMD-4083"/>
<dbReference type="EMDB" id="EMD-4475"/>
<dbReference type="EMDB" id="EMD-6934"/>
<dbReference type="EMDB" id="EMD-8596"/>
<dbReference type="EMDB" id="EMD-8597"/>
<dbReference type="SMR" id="P80373"/>
<dbReference type="IntAct" id="P80373">
    <property type="interactions" value="10"/>
</dbReference>
<dbReference type="DrugBank" id="DB08185">
    <property type="generic name" value="2-METHYLTHIO-N6-ISOPENTENYL-ADENOSINE-5'-MONOPHOSPHATE"/>
</dbReference>
<dbReference type="EnsemblBacteria" id="BAD71488">
    <property type="protein sequence ID" value="BAD71488"/>
    <property type="gene ID" value="BAD71488"/>
</dbReference>
<dbReference type="GeneID" id="3168006"/>
<dbReference type="KEGG" id="ttj:TTHA1665"/>
<dbReference type="PATRIC" id="fig|300852.9.peg.1635"/>
<dbReference type="eggNOG" id="COG0522">
    <property type="taxonomic scope" value="Bacteria"/>
</dbReference>
<dbReference type="HOGENOM" id="CLU_092403_0_1_0"/>
<dbReference type="PhylomeDB" id="P80373"/>
<dbReference type="EvolutionaryTrace" id="P80373"/>
<dbReference type="Proteomes" id="UP000000532">
    <property type="component" value="Chromosome"/>
</dbReference>
<dbReference type="GO" id="GO:0015935">
    <property type="term" value="C:small ribosomal subunit"/>
    <property type="evidence" value="ECO:0007669"/>
    <property type="project" value="InterPro"/>
</dbReference>
<dbReference type="GO" id="GO:0046872">
    <property type="term" value="F:metal ion binding"/>
    <property type="evidence" value="ECO:0007669"/>
    <property type="project" value="UniProtKB-KW"/>
</dbReference>
<dbReference type="GO" id="GO:0019843">
    <property type="term" value="F:rRNA binding"/>
    <property type="evidence" value="ECO:0007669"/>
    <property type="project" value="UniProtKB-UniRule"/>
</dbReference>
<dbReference type="GO" id="GO:0003735">
    <property type="term" value="F:structural constituent of ribosome"/>
    <property type="evidence" value="ECO:0007669"/>
    <property type="project" value="InterPro"/>
</dbReference>
<dbReference type="GO" id="GO:0042274">
    <property type="term" value="P:ribosomal small subunit biogenesis"/>
    <property type="evidence" value="ECO:0007669"/>
    <property type="project" value="TreeGrafter"/>
</dbReference>
<dbReference type="GO" id="GO:0006412">
    <property type="term" value="P:translation"/>
    <property type="evidence" value="ECO:0007669"/>
    <property type="project" value="UniProtKB-UniRule"/>
</dbReference>
<dbReference type="CDD" id="cd00165">
    <property type="entry name" value="S4"/>
    <property type="match status" value="1"/>
</dbReference>
<dbReference type="FunFam" id="1.10.1050.10:FF:000001">
    <property type="entry name" value="30S ribosomal protein S4"/>
    <property type="match status" value="1"/>
</dbReference>
<dbReference type="FunFam" id="3.10.290.10:FF:000001">
    <property type="entry name" value="30S ribosomal protein S4"/>
    <property type="match status" value="1"/>
</dbReference>
<dbReference type="Gene3D" id="1.10.1050.10">
    <property type="entry name" value="Ribosomal Protein S4 Delta 41, Chain A, domain 1"/>
    <property type="match status" value="1"/>
</dbReference>
<dbReference type="Gene3D" id="3.10.290.10">
    <property type="entry name" value="RNA-binding S4 domain"/>
    <property type="match status" value="1"/>
</dbReference>
<dbReference type="HAMAP" id="MF_01306_B">
    <property type="entry name" value="Ribosomal_uS4_B"/>
    <property type="match status" value="1"/>
</dbReference>
<dbReference type="InterPro" id="IPR022801">
    <property type="entry name" value="Ribosomal_uS4"/>
</dbReference>
<dbReference type="InterPro" id="IPR005709">
    <property type="entry name" value="Ribosomal_uS4_bac-type"/>
</dbReference>
<dbReference type="InterPro" id="IPR018079">
    <property type="entry name" value="Ribosomal_uS4_CS"/>
</dbReference>
<dbReference type="InterPro" id="IPR001912">
    <property type="entry name" value="Ribosomal_uS4_N"/>
</dbReference>
<dbReference type="InterPro" id="IPR002942">
    <property type="entry name" value="S4_RNA-bd"/>
</dbReference>
<dbReference type="InterPro" id="IPR036986">
    <property type="entry name" value="S4_RNA-bd_sf"/>
</dbReference>
<dbReference type="NCBIfam" id="NF003717">
    <property type="entry name" value="PRK05327.1"/>
    <property type="match status" value="1"/>
</dbReference>
<dbReference type="NCBIfam" id="TIGR01017">
    <property type="entry name" value="rpsD_bact"/>
    <property type="match status" value="1"/>
</dbReference>
<dbReference type="PANTHER" id="PTHR11831">
    <property type="entry name" value="30S 40S RIBOSOMAL PROTEIN"/>
    <property type="match status" value="1"/>
</dbReference>
<dbReference type="PANTHER" id="PTHR11831:SF4">
    <property type="entry name" value="SMALL RIBOSOMAL SUBUNIT PROTEIN US4M"/>
    <property type="match status" value="1"/>
</dbReference>
<dbReference type="Pfam" id="PF00163">
    <property type="entry name" value="Ribosomal_S4"/>
    <property type="match status" value="1"/>
</dbReference>
<dbReference type="Pfam" id="PF01479">
    <property type="entry name" value="S4"/>
    <property type="match status" value="1"/>
</dbReference>
<dbReference type="SMART" id="SM01390">
    <property type="entry name" value="Ribosomal_S4"/>
    <property type="match status" value="1"/>
</dbReference>
<dbReference type="SMART" id="SM00363">
    <property type="entry name" value="S4"/>
    <property type="match status" value="1"/>
</dbReference>
<dbReference type="SUPFAM" id="SSF55174">
    <property type="entry name" value="Alpha-L RNA-binding motif"/>
    <property type="match status" value="1"/>
</dbReference>
<dbReference type="PROSITE" id="PS00632">
    <property type="entry name" value="RIBOSOMAL_S4"/>
    <property type="match status" value="1"/>
</dbReference>
<dbReference type="PROSITE" id="PS50889">
    <property type="entry name" value="S4"/>
    <property type="match status" value="1"/>
</dbReference>
<proteinExistence type="evidence at protein level"/>
<name>RS4_THET8</name>
<reference key="1">
    <citation type="journal article" date="1999" name="J. Biochem.">
        <title>Cloning of the RNA polymerase alpha subunit gene from Thermus thermophilus HB8 and characterization of the protein.</title>
        <authorList>
            <person name="Wada T."/>
            <person name="Yamazaki T."/>
            <person name="Kuramitsu S."/>
            <person name="Kyogoku Y."/>
        </authorList>
    </citation>
    <scope>NUCLEOTIDE SEQUENCE [GENOMIC DNA]</scope>
</reference>
<reference key="2">
    <citation type="submission" date="2004-11" db="EMBL/GenBank/DDBJ databases">
        <title>Complete genome sequence of Thermus thermophilus HB8.</title>
        <authorList>
            <person name="Masui R."/>
            <person name="Kurokawa K."/>
            <person name="Nakagawa N."/>
            <person name="Tokunaga F."/>
            <person name="Koyama Y."/>
            <person name="Shibata T."/>
            <person name="Oshima T."/>
            <person name="Yokoyama S."/>
            <person name="Yasunaga T."/>
            <person name="Kuramitsu S."/>
        </authorList>
    </citation>
    <scope>NUCLEOTIDE SEQUENCE [LARGE SCALE GENOMIC DNA]</scope>
    <source>
        <strain>ATCC 27634 / DSM 579 / HB8</strain>
    </source>
</reference>
<reference key="3">
    <citation type="journal article" date="1994" name="Eur. J. Biochem.">
        <title>Purification and characterization of the 30S ribosomal proteins from the bacterium Thermus thermophilus.</title>
        <authorList>
            <person name="Tsiboli P."/>
            <person name="Herfurth E."/>
            <person name="Choli T."/>
        </authorList>
    </citation>
    <scope>PROTEIN SEQUENCE OF 2-27</scope>
</reference>
<reference key="4">
    <citation type="journal article" date="2005" name="Proteomics">
        <title>Extending ribosomal protein identifications to unsequenced bacterial strains using matrix-assisted laser desorption/ionization mass spectrometry.</title>
        <authorList>
            <person name="Suh M.-J."/>
            <person name="Hamburg D.M."/>
            <person name="Gregory S.T."/>
            <person name="Dahlberg A.E."/>
            <person name="Limbach P.A."/>
        </authorList>
    </citation>
    <scope>MASS SPECTROMETRY</scope>
    <source>
        <strain>ATCC 27634 / DSM 579 / HB8</strain>
    </source>
</reference>
<reference key="5">
    <citation type="journal article" date="1999" name="Nature">
        <title>Structure of a bacterial 30S ribosomal subunit at 5.5 A resolution.</title>
        <authorList>
            <person name="Clemons W.M. Jr."/>
            <person name="May J.L.C."/>
            <person name="Wimberly B.T."/>
            <person name="McCutcheon J.P."/>
            <person name="Capel M.S."/>
            <person name="Ramakrishnan V."/>
        </authorList>
    </citation>
    <scope>X-RAY CRYSTALLOGRAPHY (5.5 ANGSTROMS) OF THE 30S SUBUNIT</scope>
    <scope>SUBUNIT</scope>
</reference>
<reference key="6">
    <citation type="journal article" date="2000" name="Nature">
        <title>Structure of the 30S ribosomal subunit.</title>
        <authorList>
            <person name="Wimberly B.T."/>
            <person name="Brodersen D.E."/>
            <person name="Clemons W.M. Jr."/>
            <person name="Morgan-Warren R.J."/>
            <person name="Carter A.P."/>
            <person name="Vonrhein C."/>
            <person name="Hartsch T."/>
            <person name="Ramakrishnan V."/>
        </authorList>
    </citation>
    <scope>X-RAY CRYSTALLOGRAPHY (3.05 ANGSTROMS) OF THE 30S SUBUNIT</scope>
    <scope>SUBUNIT</scope>
</reference>
<reference key="7">
    <citation type="journal article" date="2000" name="Cell">
        <title>Structure of functionally activated small ribosomal subunit at 3.3 A resolution.</title>
        <authorList>
            <person name="Schluenzen F."/>
            <person name="Tocilj A."/>
            <person name="Zarivach R."/>
            <person name="Harms J."/>
            <person name="Gluehmann M."/>
            <person name="Janell D."/>
            <person name="Bashan A."/>
            <person name="Bartels H."/>
            <person name="Agmon I."/>
            <person name="Franceschi F."/>
            <person name="Yonath A."/>
        </authorList>
    </citation>
    <scope>X-RAY CRYSTALLOGRAPHY (3.3 ANGSTROMS) OF THE 30S SUBUNIT</scope>
    <scope>SUBUNIT</scope>
</reference>
<reference key="8">
    <citation type="journal article" date="2000" name="Cell">
        <title>The structural basis for the action of the antibiotics tetracycline, pactamycin, and hygromycin B on the 30S ribosomal subunit.</title>
        <authorList>
            <person name="Brodersen D.E."/>
            <person name="Clemons W.M. Jr."/>
            <person name="Carter A.P."/>
            <person name="Morgan-Warren R.J."/>
            <person name="Wimberly B.T."/>
            <person name="Ramakrishnan V."/>
        </authorList>
    </citation>
    <scope>X-RAY CRYSTALLOGRAPHY (3.3 ANGSTROMS) OF THE 30S SUBUNIT</scope>
    <scope>SUBUNIT</scope>
</reference>
<reference key="9">
    <citation type="journal article" date="2000" name="Nature">
        <title>Functional insights from the structure of the 30S ribosomal subunit and its interactions with antibiotics.</title>
        <authorList>
            <person name="Carter A.P."/>
            <person name="Clemons W.M. Jr."/>
            <person name="Brodersen D.E."/>
            <person name="Morgan-Warren R.J."/>
            <person name="Wimberly B.T."/>
            <person name="Ramakrishnan V."/>
        </authorList>
    </citation>
    <scope>X-RAY CRYSTALLOGRAPHY (3.0 ANGSTROMS) OF THE 30S SUBUNIT</scope>
    <scope>SUBUNIT</scope>
</reference>
<reference key="10">
    <citation type="journal article" date="2001" name="Cell">
        <title>The path of messenger RNA through the ribosome.</title>
        <authorList>
            <person name="Yusupova G.Z."/>
            <person name="Yusupov M.M."/>
            <person name="Cate J.H.D."/>
            <person name="Noller H.F."/>
        </authorList>
    </citation>
    <scope>X-RAY CRYSTALLOGRAPHY (5.0 ANGSTROMS) OF THE RIBOSOME</scope>
    <scope>SUBUNIT</scope>
</reference>
<reference key="11">
    <citation type="journal article" date="2001" name="EMBO J.">
        <title>Crystal structures of complexes of the small ribosomal subunit with tetracycline, edeine and IF3.</title>
        <authorList>
            <person name="Pioletti M."/>
            <person name="Schluenzen F."/>
            <person name="Harms J."/>
            <person name="Zarivach R."/>
            <person name="Gluehmann M."/>
            <person name="Avila H."/>
            <person name="Bashan A."/>
            <person name="Bartels H."/>
            <person name="Auerbach T."/>
            <person name="Jacobi C."/>
            <person name="Hartsch T."/>
            <person name="Yonath A."/>
            <person name="Franceschi F."/>
        </authorList>
    </citation>
    <scope>X-RAY CRYSTALLOGRAPHY (3.2 ANGSTROMS) OF THE 30S SUBUNIT</scope>
    <scope>SUBUNIT</scope>
</reference>
<reference key="12">
    <citation type="journal article" date="2001" name="Science">
        <title>Crystal structure of an initiation factor bound to the 30S ribosomal subunit.</title>
        <authorList>
            <person name="Carter A.P."/>
            <person name="Clemons W.M. Jr."/>
            <person name="Brodersen D.E."/>
            <person name="Morgan-Warren R.J."/>
            <person name="Hartsch T."/>
            <person name="Wimberly B.T."/>
            <person name="Ramakrishnan V."/>
        </authorList>
    </citation>
    <scope>X-RAY CRYSTALLOGRAPHY (3.2 ANGSTROMS) OF THE 30S SUBUNIT</scope>
    <scope>SUBUNIT</scope>
</reference>
<reference key="13">
    <citation type="journal article" date="2001" name="Science">
        <title>Crystal structure of the ribosome at 5.5 A resolution.</title>
        <authorList>
            <person name="Yusupov M.M."/>
            <person name="Yusupova G.Z."/>
            <person name="Baucom A."/>
            <person name="Lieberman K."/>
            <person name="Earnest T.N."/>
            <person name="Cate J.H.D."/>
            <person name="Noller H.F."/>
        </authorList>
    </citation>
    <scope>X-RAY CRYSTALLOGRAPHY (5.5 ANGSTROMS) OF THE RIBOSOME</scope>
    <scope>SUBUNIT</scope>
</reference>
<reference key="14">
    <citation type="journal article" date="2001" name="Science">
        <title>Recognition of cognate transfer RNA by the 30S ribosomal subunit.</title>
        <authorList>
            <person name="Ogle J.M."/>
            <person name="Brodersen D.E."/>
            <person name="Clemons W.M. Jr."/>
            <person name="Tarry M.J."/>
            <person name="Carter A.P."/>
            <person name="Ramakrishnan V."/>
        </authorList>
    </citation>
    <scope>X-RAY CRYSTALLOGRAPHY (3.11 ANGSTROMS) OF THE 30S SUBUNIT</scope>
    <scope>SUBUNIT</scope>
</reference>
<reference key="15">
    <citation type="journal article" date="2002" name="J. Mol. Biol.">
        <title>Crystal structure of the 30S ribosomal subunit from Thermus thermophilus: structure of the proteins and their interactions with 16S RNA.</title>
        <authorList>
            <person name="Brodersen D.E."/>
            <person name="Clemons W.M. Jr."/>
            <person name="Carter A.P."/>
            <person name="Wimberly B.T."/>
            <person name="Ramakrishnan V."/>
        </authorList>
    </citation>
    <scope>X-RAY CRYSTALLOGRAPHY (3.05 ANGSTROMS) OF THE 30S SUBUNIT</scope>
    <scope>FUNCTION</scope>
    <scope>COFACTOR</scope>
    <scope>SUBUNIT</scope>
</reference>
<reference key="16">
    <citation type="journal article" date="2005" name="Cell">
        <title>Crystal structures of the ribosome in complex with release factors RF1 and RF2 bound to a cognate stop codon.</title>
        <authorList>
            <person name="Petry S."/>
            <person name="Brodersen D.E."/>
            <person name="Murphy F.V."/>
            <person name="Dunham C.M."/>
            <person name="Selmer M."/>
            <person name="Tarry M.J."/>
            <person name="Kelley A.C."/>
            <person name="Ramakrishnan V."/>
        </authorList>
    </citation>
    <scope>X-RAY CRYSTALLOGRAPHY (5.90 ANGSTROMS) OF 70S RIBOSOME IN COMPLEX WITH RF1 OR RF2</scope>
    <scope>SUBUNIT</scope>
</reference>
<reference key="17">
    <citation type="journal article" date="2008" name="Science">
        <title>Insights into translational termination from the structure of RF2 bound to the ribosome.</title>
        <authorList>
            <person name="Weixlbaumer A."/>
            <person name="Jin H."/>
            <person name="Neubauer C."/>
            <person name="Voorhees R.M."/>
            <person name="Petry S."/>
            <person name="Kelley A.C."/>
            <person name="Ramakrishnan V."/>
        </authorList>
    </citation>
    <scope>X-RAY CRYSTALLOGRAPHY (3.45 ANGSTROMS) OF 70S RIBOSOME IN COMPLEX WITH RF2</scope>
    <scope>SUBUNIT</scope>
</reference>
<reference key="18">
    <citation type="journal article" date="2010" name="Proc. Natl. Acad. Sci. U.S.A.">
        <title>Structure of the 70S ribosome bound to release factor 2 and a substrate analog provides insights into catalysis of peptide release.</title>
        <authorList>
            <person name="Jin H."/>
            <person name="Kelley A.C."/>
            <person name="Loakes D."/>
            <person name="Ramakrishnan V."/>
        </authorList>
    </citation>
    <scope>X-RAY CRYSTALLOGRAPHY (3.10 ANGSTROMS) OF 70S RIBOSOME IN COMPLEX WITH RF2</scope>
    <scope>SUBUNIT</scope>
</reference>
<reference key="19">
    <citation type="journal article" date="2015" name="Nat. Struct. Mol. Biol.">
        <title>Structural insights into the role of rRNA modifications in protein synthesis and ribosome assembly.</title>
        <authorList>
            <person name="Polikanov Y.S."/>
            <person name="Melnikov S.V."/>
            <person name="Soll D."/>
            <person name="Steitz T.A."/>
        </authorList>
    </citation>
    <scope>X-RAY CRYSTALLOGRAPHY (2.30 ANGSTROMS) OF THE 70S RIBOSOME</scope>
    <scope>COFACTOR</scope>
    <scope>SUBUNIT</scope>
</reference>
<reference key="20">
    <citation type="journal article" date="2016" name="Nucleic Acids Res.">
        <title>Structure of the mammalian antimicrobial peptide Bac7(1-16) bound within the exit tunnel of a bacterial ribosome.</title>
        <authorList>
            <person name="Seefeldt A.C."/>
            <person name="Graf M."/>
            <person name="Perebaskine N."/>
            <person name="Nguyen F."/>
            <person name="Arenz S."/>
            <person name="Mardirossian M."/>
            <person name="Scocchi M."/>
            <person name="Wilson D.N."/>
            <person name="Innis C.A."/>
        </authorList>
    </citation>
    <scope>X-RAY CRYSTALLOGRAPHY (2.80 ANGSTROMS) OF 2-209 OF THE 70S RIBOSOME</scope>
    <scope>COFACTOR</scope>
    <scope>SUBUNIT</scope>
</reference>